<reference key="1">
    <citation type="journal article" date="2002" name="EMBO J.">
        <title>Protein 61K, encoded by a gene (PRPF31) linked to autosomal dominant retinitis pigmentosa, is required for U4/U6.U5 tri-snRNP formation and pre-mRNA splicing.</title>
        <authorList>
            <person name="Makarova O.V."/>
            <person name="Makarov E.M."/>
            <person name="Liu S."/>
            <person name="Vornlocher H.-P."/>
            <person name="Luehrmann R."/>
        </authorList>
    </citation>
    <scope>NUCLEOTIDE SEQUENCE [MRNA] (ISOFORM 1)</scope>
    <scope>PARTIAL PROTEIN SEQUENCE</scope>
    <scope>SUBUNIT</scope>
    <scope>SUBCELLULAR LOCATION</scope>
    <scope>FUNCTION</scope>
    <scope>INTERACTION WITH PRPF6</scope>
</reference>
<reference key="2">
    <citation type="journal article" date="2001" name="Cancer Immun.">
        <title>Humoral immunity to human breast cancer: antigen definition and quantitative analysis of mRNA expression.</title>
        <authorList>
            <person name="Scanlan M.J."/>
            <person name="Gout I."/>
            <person name="Gordon C.M."/>
            <person name="Williamson B."/>
            <person name="Stockert E."/>
            <person name="Gure A.O."/>
            <person name="Jaeger D."/>
            <person name="Chen Y.-T."/>
            <person name="Mackay A."/>
            <person name="O'Hare M.J."/>
            <person name="Old L.J."/>
        </authorList>
    </citation>
    <scope>NUCLEOTIDE SEQUENCE [MRNA] (ISOFORM 3)</scope>
    <source>
        <tissue>Mammary gland</tissue>
    </source>
</reference>
<reference key="3">
    <citation type="journal article" date="2001" name="Genome Res.">
        <title>Towards a catalog of human genes and proteins: sequencing and analysis of 500 novel complete protein coding human cDNAs.</title>
        <authorList>
            <person name="Wiemann S."/>
            <person name="Weil B."/>
            <person name="Wellenreuther R."/>
            <person name="Gassenhuber J."/>
            <person name="Glassl S."/>
            <person name="Ansorge W."/>
            <person name="Boecher M."/>
            <person name="Bloecker H."/>
            <person name="Bauersachs S."/>
            <person name="Blum H."/>
            <person name="Lauber J."/>
            <person name="Duesterhoeft A."/>
            <person name="Beyer A."/>
            <person name="Koehrer K."/>
            <person name="Strack N."/>
            <person name="Mewes H.-W."/>
            <person name="Ottenwaelder B."/>
            <person name="Obermaier B."/>
            <person name="Tampe J."/>
            <person name="Heubner D."/>
            <person name="Wambutt R."/>
            <person name="Korn B."/>
            <person name="Klein M."/>
            <person name="Poustka A."/>
        </authorList>
    </citation>
    <scope>NUCLEOTIDE SEQUENCE [LARGE SCALE MRNA] (ISOFORM 1)</scope>
    <source>
        <tissue>Kidney</tissue>
    </source>
</reference>
<reference key="4">
    <citation type="journal article" date="2004" name="Nat. Genet.">
        <title>Complete sequencing and characterization of 21,243 full-length human cDNAs.</title>
        <authorList>
            <person name="Ota T."/>
            <person name="Suzuki Y."/>
            <person name="Nishikawa T."/>
            <person name="Otsuki T."/>
            <person name="Sugiyama T."/>
            <person name="Irie R."/>
            <person name="Wakamatsu A."/>
            <person name="Hayashi K."/>
            <person name="Sato H."/>
            <person name="Nagai K."/>
            <person name="Kimura K."/>
            <person name="Makita H."/>
            <person name="Sekine M."/>
            <person name="Obayashi M."/>
            <person name="Nishi T."/>
            <person name="Shibahara T."/>
            <person name="Tanaka T."/>
            <person name="Ishii S."/>
            <person name="Yamamoto J."/>
            <person name="Saito K."/>
            <person name="Kawai Y."/>
            <person name="Isono Y."/>
            <person name="Nakamura Y."/>
            <person name="Nagahari K."/>
            <person name="Murakami K."/>
            <person name="Yasuda T."/>
            <person name="Iwayanagi T."/>
            <person name="Wagatsuma M."/>
            <person name="Shiratori A."/>
            <person name="Sudo H."/>
            <person name="Hosoiri T."/>
            <person name="Kaku Y."/>
            <person name="Kodaira H."/>
            <person name="Kondo H."/>
            <person name="Sugawara M."/>
            <person name="Takahashi M."/>
            <person name="Kanda K."/>
            <person name="Yokoi T."/>
            <person name="Furuya T."/>
            <person name="Kikkawa E."/>
            <person name="Omura Y."/>
            <person name="Abe K."/>
            <person name="Kamihara K."/>
            <person name="Katsuta N."/>
            <person name="Sato K."/>
            <person name="Tanikawa M."/>
            <person name="Yamazaki M."/>
            <person name="Ninomiya K."/>
            <person name="Ishibashi T."/>
            <person name="Yamashita H."/>
            <person name="Murakawa K."/>
            <person name="Fujimori K."/>
            <person name="Tanai H."/>
            <person name="Kimata M."/>
            <person name="Watanabe M."/>
            <person name="Hiraoka S."/>
            <person name="Chiba Y."/>
            <person name="Ishida S."/>
            <person name="Ono Y."/>
            <person name="Takiguchi S."/>
            <person name="Watanabe S."/>
            <person name="Yosida M."/>
            <person name="Hotuta T."/>
            <person name="Kusano J."/>
            <person name="Kanehori K."/>
            <person name="Takahashi-Fujii A."/>
            <person name="Hara H."/>
            <person name="Tanase T.-O."/>
            <person name="Nomura Y."/>
            <person name="Togiya S."/>
            <person name="Komai F."/>
            <person name="Hara R."/>
            <person name="Takeuchi K."/>
            <person name="Arita M."/>
            <person name="Imose N."/>
            <person name="Musashino K."/>
            <person name="Yuuki H."/>
            <person name="Oshima A."/>
            <person name="Sasaki N."/>
            <person name="Aotsuka S."/>
            <person name="Yoshikawa Y."/>
            <person name="Matsunawa H."/>
            <person name="Ichihara T."/>
            <person name="Shiohata N."/>
            <person name="Sano S."/>
            <person name="Moriya S."/>
            <person name="Momiyama H."/>
            <person name="Satoh N."/>
            <person name="Takami S."/>
            <person name="Terashima Y."/>
            <person name="Suzuki O."/>
            <person name="Nakagawa S."/>
            <person name="Senoh A."/>
            <person name="Mizoguchi H."/>
            <person name="Goto Y."/>
            <person name="Shimizu F."/>
            <person name="Wakebe H."/>
            <person name="Hishigaki H."/>
            <person name="Watanabe T."/>
            <person name="Sugiyama A."/>
            <person name="Takemoto M."/>
            <person name="Kawakami B."/>
            <person name="Yamazaki M."/>
            <person name="Watanabe K."/>
            <person name="Kumagai A."/>
            <person name="Itakura S."/>
            <person name="Fukuzumi Y."/>
            <person name="Fujimori Y."/>
            <person name="Komiyama M."/>
            <person name="Tashiro H."/>
            <person name="Tanigami A."/>
            <person name="Fujiwara T."/>
            <person name="Ono T."/>
            <person name="Yamada K."/>
            <person name="Fujii Y."/>
            <person name="Ozaki K."/>
            <person name="Hirao M."/>
            <person name="Ohmori Y."/>
            <person name="Kawabata A."/>
            <person name="Hikiji T."/>
            <person name="Kobatake N."/>
            <person name="Inagaki H."/>
            <person name="Ikema Y."/>
            <person name="Okamoto S."/>
            <person name="Okitani R."/>
            <person name="Kawakami T."/>
            <person name="Noguchi S."/>
            <person name="Itoh T."/>
            <person name="Shigeta K."/>
            <person name="Senba T."/>
            <person name="Matsumura K."/>
            <person name="Nakajima Y."/>
            <person name="Mizuno T."/>
            <person name="Morinaga M."/>
            <person name="Sasaki M."/>
            <person name="Togashi T."/>
            <person name="Oyama M."/>
            <person name="Hata H."/>
            <person name="Watanabe M."/>
            <person name="Komatsu T."/>
            <person name="Mizushima-Sugano J."/>
            <person name="Satoh T."/>
            <person name="Shirai Y."/>
            <person name="Takahashi Y."/>
            <person name="Nakagawa K."/>
            <person name="Okumura K."/>
            <person name="Nagase T."/>
            <person name="Nomura N."/>
            <person name="Kikuchi H."/>
            <person name="Masuho Y."/>
            <person name="Yamashita R."/>
            <person name="Nakai K."/>
            <person name="Yada T."/>
            <person name="Nakamura Y."/>
            <person name="Ohara O."/>
            <person name="Isogai T."/>
            <person name="Sugano S."/>
        </authorList>
    </citation>
    <scope>NUCLEOTIDE SEQUENCE [LARGE SCALE MRNA] (ISOFORM 2)</scope>
    <source>
        <tissue>Testis</tissue>
    </source>
</reference>
<reference key="5">
    <citation type="journal article" date="2011" name="Invest. Ophthalmol. Vis. Sci.">
        <title>Full-length transcriptome analysis of human retina-derived cell lines ARPE-19 and Y79 using the vector-capping method.</title>
        <authorList>
            <person name="Oshikawa M."/>
            <person name="Tsutsui C."/>
            <person name="Ikegami T."/>
            <person name="Fuchida Y."/>
            <person name="Matsubara M."/>
            <person name="Toyama S."/>
            <person name="Usami R."/>
            <person name="Ohtoko K."/>
            <person name="Kato S."/>
        </authorList>
    </citation>
    <scope>NUCLEOTIDE SEQUENCE [LARGE SCALE MRNA] (ISOFORM 4)</scope>
    <source>
        <tissue>Retinoblastoma</tissue>
    </source>
</reference>
<reference key="6">
    <citation type="journal article" date="2004" name="Nature">
        <title>The DNA sequence and biology of human chromosome 19.</title>
        <authorList>
            <person name="Grimwood J."/>
            <person name="Gordon L.A."/>
            <person name="Olsen A.S."/>
            <person name="Terry A."/>
            <person name="Schmutz J."/>
            <person name="Lamerdin J.E."/>
            <person name="Hellsten U."/>
            <person name="Goodstein D."/>
            <person name="Couronne O."/>
            <person name="Tran-Gyamfi M."/>
            <person name="Aerts A."/>
            <person name="Altherr M."/>
            <person name="Ashworth L."/>
            <person name="Bajorek E."/>
            <person name="Black S."/>
            <person name="Branscomb E."/>
            <person name="Caenepeel S."/>
            <person name="Carrano A.V."/>
            <person name="Caoile C."/>
            <person name="Chan Y.M."/>
            <person name="Christensen M."/>
            <person name="Cleland C.A."/>
            <person name="Copeland A."/>
            <person name="Dalin E."/>
            <person name="Dehal P."/>
            <person name="Denys M."/>
            <person name="Detter J.C."/>
            <person name="Escobar J."/>
            <person name="Flowers D."/>
            <person name="Fotopulos D."/>
            <person name="Garcia C."/>
            <person name="Georgescu A.M."/>
            <person name="Glavina T."/>
            <person name="Gomez M."/>
            <person name="Gonzales E."/>
            <person name="Groza M."/>
            <person name="Hammon N."/>
            <person name="Hawkins T."/>
            <person name="Haydu L."/>
            <person name="Ho I."/>
            <person name="Huang W."/>
            <person name="Israni S."/>
            <person name="Jett J."/>
            <person name="Kadner K."/>
            <person name="Kimball H."/>
            <person name="Kobayashi A."/>
            <person name="Larionov V."/>
            <person name="Leem S.-H."/>
            <person name="Lopez F."/>
            <person name="Lou Y."/>
            <person name="Lowry S."/>
            <person name="Malfatti S."/>
            <person name="Martinez D."/>
            <person name="McCready P.M."/>
            <person name="Medina C."/>
            <person name="Morgan J."/>
            <person name="Nelson K."/>
            <person name="Nolan M."/>
            <person name="Ovcharenko I."/>
            <person name="Pitluck S."/>
            <person name="Pollard M."/>
            <person name="Popkie A.P."/>
            <person name="Predki P."/>
            <person name="Quan G."/>
            <person name="Ramirez L."/>
            <person name="Rash S."/>
            <person name="Retterer J."/>
            <person name="Rodriguez A."/>
            <person name="Rogers S."/>
            <person name="Salamov A."/>
            <person name="Salazar A."/>
            <person name="She X."/>
            <person name="Smith D."/>
            <person name="Slezak T."/>
            <person name="Solovyev V."/>
            <person name="Thayer N."/>
            <person name="Tice H."/>
            <person name="Tsai M."/>
            <person name="Ustaszewska A."/>
            <person name="Vo N."/>
            <person name="Wagner M."/>
            <person name="Wheeler J."/>
            <person name="Wu K."/>
            <person name="Xie G."/>
            <person name="Yang J."/>
            <person name="Dubchak I."/>
            <person name="Furey T.S."/>
            <person name="DeJong P."/>
            <person name="Dickson M."/>
            <person name="Gordon D."/>
            <person name="Eichler E.E."/>
            <person name="Pennacchio L.A."/>
            <person name="Richardson P."/>
            <person name="Stubbs L."/>
            <person name="Rokhsar D.S."/>
            <person name="Myers R.M."/>
            <person name="Rubin E.M."/>
            <person name="Lucas S.M."/>
        </authorList>
    </citation>
    <scope>NUCLEOTIDE SEQUENCE [LARGE SCALE GENOMIC DNA]</scope>
</reference>
<reference key="7">
    <citation type="submission" date="2005-07" db="EMBL/GenBank/DDBJ databases">
        <authorList>
            <person name="Mural R.J."/>
            <person name="Istrail S."/>
            <person name="Sutton G.G."/>
            <person name="Florea L."/>
            <person name="Halpern A.L."/>
            <person name="Mobarry C.M."/>
            <person name="Lippert R."/>
            <person name="Walenz B."/>
            <person name="Shatkay H."/>
            <person name="Dew I."/>
            <person name="Miller J.R."/>
            <person name="Flanigan M.J."/>
            <person name="Edwards N.J."/>
            <person name="Bolanos R."/>
            <person name="Fasulo D."/>
            <person name="Halldorsson B.V."/>
            <person name="Hannenhalli S."/>
            <person name="Turner R."/>
            <person name="Yooseph S."/>
            <person name="Lu F."/>
            <person name="Nusskern D.R."/>
            <person name="Shue B.C."/>
            <person name="Zheng X.H."/>
            <person name="Zhong F."/>
            <person name="Delcher A.L."/>
            <person name="Huson D.H."/>
            <person name="Kravitz S.A."/>
            <person name="Mouchard L."/>
            <person name="Reinert K."/>
            <person name="Remington K.A."/>
            <person name="Clark A.G."/>
            <person name="Waterman M.S."/>
            <person name="Eichler E.E."/>
            <person name="Adams M.D."/>
            <person name="Hunkapiller M.W."/>
            <person name="Myers E.W."/>
            <person name="Venter J.C."/>
        </authorList>
    </citation>
    <scope>NUCLEOTIDE SEQUENCE [LARGE SCALE GENOMIC DNA]</scope>
</reference>
<reference key="8">
    <citation type="journal article" date="2004" name="Genome Res.">
        <title>The status, quality, and expansion of the NIH full-length cDNA project: the Mammalian Gene Collection (MGC).</title>
        <authorList>
            <consortium name="The MGC Project Team"/>
        </authorList>
    </citation>
    <scope>NUCLEOTIDE SEQUENCE [LARGE SCALE MRNA] (ISOFORM 1)</scope>
    <source>
        <tissue>Brain</tissue>
    </source>
</reference>
<reference key="9">
    <citation type="journal article" date="2005" name="Cell">
        <title>Physical association and coordinate function of the H3 K4 methyltransferase MLL1 and the H4 K16 acetyltransferase MOF.</title>
        <authorList>
            <person name="Dou Y."/>
            <person name="Milne T.A."/>
            <person name="Tackett A.J."/>
            <person name="Smith E.R."/>
            <person name="Fukuda A."/>
            <person name="Wysocka J."/>
            <person name="Allis C.D."/>
            <person name="Chait B.T."/>
            <person name="Hess J.L."/>
            <person name="Roeder R.G."/>
        </authorList>
    </citation>
    <scope>IDENTIFICATION IN THE MLL1/MLL COMPLEX</scope>
</reference>
<reference key="10">
    <citation type="journal article" date="2006" name="RNA">
        <title>The network of protein-protein interactions within the human U4/U6.U5 tri-snRNP.</title>
        <authorList>
            <person name="Liu S."/>
            <person name="Rauhut R."/>
            <person name="Vornlocher H.-P."/>
            <person name="Luehrmann R."/>
        </authorList>
    </citation>
    <scope>SUBUNIT</scope>
</reference>
<reference key="11">
    <citation type="journal article" date="2008" name="Proc. Natl. Acad. Sci. U.S.A.">
        <title>A quantitative atlas of mitotic phosphorylation.</title>
        <authorList>
            <person name="Dephoure N."/>
            <person name="Zhou C."/>
            <person name="Villen J."/>
            <person name="Beausoleil S.A."/>
            <person name="Bakalarski C.E."/>
            <person name="Elledge S.J."/>
            <person name="Gygi S.P."/>
        </authorList>
    </citation>
    <scope>PHOSPHORYLATION [LARGE SCALE ANALYSIS] AT SER-450 AND THR-455</scope>
    <scope>IDENTIFICATION BY MASS SPECTROMETRY [LARGE SCALE ANALYSIS]</scope>
    <source>
        <tissue>Cervix carcinoma</tissue>
    </source>
</reference>
<reference key="12">
    <citation type="journal article" date="2009" name="Sci. Signal.">
        <title>Quantitative phosphoproteomic analysis of T cell receptor signaling reveals system-wide modulation of protein-protein interactions.</title>
        <authorList>
            <person name="Mayya V."/>
            <person name="Lundgren D.H."/>
            <person name="Hwang S.-I."/>
            <person name="Rezaul K."/>
            <person name="Wu L."/>
            <person name="Eng J.K."/>
            <person name="Rodionov V."/>
            <person name="Han D.K."/>
        </authorList>
    </citation>
    <scope>PHOSPHORYLATION [LARGE SCALE ANALYSIS] AT SER-379 AND THR-455</scope>
    <scope>IDENTIFICATION BY MASS SPECTROMETRY [LARGE SCALE ANALYSIS]</scope>
    <source>
        <tissue>Leukemic T-cell</tissue>
    </source>
</reference>
<reference key="13">
    <citation type="journal article" date="2010" name="Nat. Struct. Mol. Biol.">
        <title>Human PRP4 kinase is required for stable tri-snRNP association during spliceosomal B complex formation.</title>
        <authorList>
            <person name="Schneider M."/>
            <person name="Hsiao H.H."/>
            <person name="Will C.L."/>
            <person name="Giet R."/>
            <person name="Urlaub H."/>
            <person name="Luehrmann R."/>
        </authorList>
    </citation>
    <scope>PHOSPHORYLATION BY PRP4K</scope>
    <scope>FUNCTION</scope>
</reference>
<reference key="14">
    <citation type="journal article" date="2010" name="Sci. Signal.">
        <title>Quantitative phosphoproteomics reveals widespread full phosphorylation site occupancy during mitosis.</title>
        <authorList>
            <person name="Olsen J.V."/>
            <person name="Vermeulen M."/>
            <person name="Santamaria A."/>
            <person name="Kumar C."/>
            <person name="Miller M.L."/>
            <person name="Jensen L.J."/>
            <person name="Gnad F."/>
            <person name="Cox J."/>
            <person name="Jensen T.S."/>
            <person name="Nigg E.A."/>
            <person name="Brunak S."/>
            <person name="Mann M."/>
        </authorList>
    </citation>
    <scope>PHOSPHORYLATION [LARGE SCALE ANALYSIS] AT THR-455</scope>
    <scope>IDENTIFICATION BY MASS SPECTROMETRY [LARGE SCALE ANALYSIS]</scope>
    <source>
        <tissue>Cervix carcinoma</tissue>
    </source>
</reference>
<reference key="15">
    <citation type="journal article" date="2011" name="BMC Syst. Biol.">
        <title>Initial characterization of the human central proteome.</title>
        <authorList>
            <person name="Burkard T.R."/>
            <person name="Planyavsky M."/>
            <person name="Kaupe I."/>
            <person name="Breitwieser F.P."/>
            <person name="Buerckstuemmer T."/>
            <person name="Bennett K.L."/>
            <person name="Superti-Furga G."/>
            <person name="Colinge J."/>
        </authorList>
    </citation>
    <scope>IDENTIFICATION BY MASS SPECTROMETRY [LARGE SCALE ANALYSIS]</scope>
</reference>
<reference key="16">
    <citation type="journal article" date="2011" name="J. Biol. Chem.">
        <title>CTNNBL1 is a novel nuclear localization sequence-binding protein that recognizes RNA-splicing factors CDC5L and Prp31.</title>
        <authorList>
            <person name="Ganesh K."/>
            <person name="Adam S."/>
            <person name="Taylor B."/>
            <person name="Simpson P."/>
            <person name="Rada C."/>
            <person name="Neuberger M."/>
        </authorList>
    </citation>
    <scope>INTERACTION WITH CTNNBL1</scope>
</reference>
<reference key="17">
    <citation type="journal article" date="2013" name="J. Proteome Res.">
        <title>Toward a comprehensive characterization of a human cancer cell phosphoproteome.</title>
        <authorList>
            <person name="Zhou H."/>
            <person name="Di Palma S."/>
            <person name="Preisinger C."/>
            <person name="Peng M."/>
            <person name="Polat A.N."/>
            <person name="Heck A.J."/>
            <person name="Mohammed S."/>
        </authorList>
    </citation>
    <scope>PHOSPHORYLATION [LARGE SCALE ANALYSIS] AT SER-432; SER-439; THR-440 AND THR-455</scope>
    <scope>IDENTIFICATION BY MASS SPECTROMETRY [LARGE SCALE ANALYSIS]</scope>
    <source>
        <tissue>Cervix carcinoma</tissue>
        <tissue>Erythroleukemia</tissue>
    </source>
</reference>
<reference key="18">
    <citation type="journal article" date="2014" name="J. Proteomics">
        <title>An enzyme assisted RP-RPLC approach for in-depth analysis of human liver phosphoproteome.</title>
        <authorList>
            <person name="Bian Y."/>
            <person name="Song C."/>
            <person name="Cheng K."/>
            <person name="Dong M."/>
            <person name="Wang F."/>
            <person name="Huang J."/>
            <person name="Sun D."/>
            <person name="Wang L."/>
            <person name="Ye M."/>
            <person name="Zou H."/>
        </authorList>
    </citation>
    <scope>PHOSPHORYLATION [LARGE SCALE ANALYSIS] AT SER-395 AND THR-455</scope>
    <scope>IDENTIFICATION BY MASS SPECTROMETRY [LARGE SCALE ANALYSIS]</scope>
    <source>
        <tissue>Liver</tissue>
    </source>
</reference>
<reference key="19">
    <citation type="journal article" date="2017" name="Nat. Struct. Mol. Biol.">
        <title>Site-specific mapping of the human SUMO proteome reveals co-modification with phosphorylation.</title>
        <authorList>
            <person name="Hendriks I.A."/>
            <person name="Lyon D."/>
            <person name="Young C."/>
            <person name="Jensen L.J."/>
            <person name="Vertegaal A.C."/>
            <person name="Nielsen M.L."/>
        </authorList>
    </citation>
    <scope>SUMOYLATION [LARGE SCALE ANALYSIS] AT LYS-471 AND LYS-478</scope>
    <scope>IDENTIFICATION BY MASS SPECTROMETRY [LARGE SCALE ANALYSIS]</scope>
</reference>
<reference key="20">
    <citation type="journal article" date="2021" name="Nucleic Acids Res.">
        <title>SANS (USH1G) regulates pre-mRNA splicing by mediating the intra-nuclear transfer of tri-snRNP complexes.</title>
        <authorList>
            <person name="Yildirim A."/>
            <person name="Mozaffari-Jovin S."/>
            <person name="Wallisch A.K."/>
            <person name="Schaefer J."/>
            <person name="Ludwig S.E.J."/>
            <person name="Urlaub H."/>
            <person name="Luehrmann R."/>
            <person name="Wolfrum U."/>
        </authorList>
    </citation>
    <scope>INTERACTION WITH USH1G</scope>
    <scope>SUBCELLULAR LOCATION</scope>
</reference>
<reference key="21">
    <citation type="journal article" date="2007" name="Science">
        <title>Binding of the human Prp31 Nop domain to a composite RNA-protein platform in U4 snRNP.</title>
        <authorList>
            <person name="Liu S."/>
            <person name="Li P."/>
            <person name="Dybkov O."/>
            <person name="Nottrott S."/>
            <person name="Hartmuth K."/>
            <person name="Luehrmann R."/>
            <person name="Carlomagno T."/>
            <person name="Wahl M.C."/>
        </authorList>
    </citation>
    <scope>X-RAY CRYSTALLOGRAPHY (2.6 ANGSTROMS) OF 78-333 IN COMPLEX WITH SNU13 AND STEM-LOOP RNA OF U4 SNRNA</scope>
    <scope>COILED-COIL DOMAIN</scope>
    <scope>INTERACTION WITH PRPF6</scope>
    <scope>CHARACTERIZATION OF VARIANTS RP11 GLU-194 AND PRO-216</scope>
    <scope>MUTAGENESIS OF HIS-270</scope>
</reference>
<reference evidence="24 25" key="22">
    <citation type="journal article" date="2011" name="RNA">
        <title>Structural basis for the dual U4 and U4atac snRNA-binding specificity of spliceosomal protein hPrp31.</title>
        <authorList>
            <person name="Liu S."/>
            <person name="Ghalei H."/>
            <person name="Luhrmann R."/>
            <person name="Wahl M.C."/>
        </authorList>
    </citation>
    <scope>X-RAY CRYSTALLOGRAPHY (2.63 ANGSTROMS) OF 85-333 IN COMPLEX WITH SNU13 AND STEM-LOOP RNA OF U4ATAC SNRNA</scope>
    <scope>SUBUNIT</scope>
    <scope>DOMAIN</scope>
    <scope>COILED COIL</scope>
</reference>
<reference evidence="23" key="23">
    <citation type="journal article" date="2016" name="Science">
        <title>Molecular architecture of the human U4/U6.U5 tri-snRNP.</title>
        <authorList>
            <person name="Agafonov D.E."/>
            <person name="Kastner B."/>
            <person name="Dybkov O."/>
            <person name="Hofele R.V."/>
            <person name="Liu W.T."/>
            <person name="Urlaub H."/>
            <person name="Luhrmann R."/>
            <person name="Stark H."/>
        </authorList>
    </citation>
    <scope>STRUCTURE BY ELECTRON MICROSCOPY (7.00 ANGSTROMS)</scope>
    <scope>SUBUNIT</scope>
    <scope>SUBCELLULAR LOCATION</scope>
    <scope>IDENTIFICATION BY MASS SPECTROMETRY</scope>
</reference>
<reference evidence="26" key="24">
    <citation type="journal article" date="2017" name="Cell">
        <title>Cryo-EM Structure of a Pre-catalytic Human Spliceosome Primed for Activation.</title>
        <authorList>
            <person name="Bertram K."/>
            <person name="Agafonov D.E."/>
            <person name="Dybkov O."/>
            <person name="Haselbach D."/>
            <person name="Leelaram M.N."/>
            <person name="Will C.L."/>
            <person name="Urlaub H."/>
            <person name="Kastner B."/>
            <person name="Luhrmann R."/>
            <person name="Stark H."/>
        </authorList>
    </citation>
    <scope>STRUCTURE BY ELECTRON MICROSCOPY (4.50 ANGSTROMS)</scope>
    <scope>FUNCTION</scope>
    <scope>IDENTIFICATION BY MASS SPECTROMETRY</scope>
    <scope>SUBCELLULAR LOCATION</scope>
    <scope>SUBUNIT</scope>
</reference>
<reference key="25">
    <citation type="journal article" date="1996" name="Am. J. Hum. Genet.">
        <title>Evidence for a major retinitis pigmentosa locus on 19q13.4 (RP11) and association with a unique bimodal expressivity phenotype.</title>
        <authorList>
            <person name="Al-Maghtheh M."/>
            <person name="Vithana E."/>
            <person name="Tarttelin E."/>
            <person name="Jay M."/>
            <person name="Evans K."/>
            <person name="Moore T."/>
            <person name="Bhattacharya S."/>
            <person name="Inglehearn C.F."/>
        </authorList>
    </citation>
    <scope>VARIANT RP11 PRO-216</scope>
</reference>
<reference key="26">
    <citation type="journal article" date="2001" name="Mol. Cell">
        <title>A human homolog of yeast pre-mRNA splicing gene, PRP31, underlies autosomal dominant retinitis pigmentosa on chromosome 19q13.4 (RP11).</title>
        <authorList>
            <person name="Vithana E.N."/>
            <person name="Abu-Safieh L."/>
            <person name="Allen M.J."/>
            <person name="Carey A."/>
            <person name="Papaioannou M."/>
            <person name="Chakarova C."/>
            <person name="Al-Maghtheh M."/>
            <person name="Ebenezer N.D."/>
            <person name="Willis C."/>
            <person name="Moore A.T."/>
            <person name="Bird A.C."/>
            <person name="Hunt D.M."/>
            <person name="Bhattacharya S.S."/>
        </authorList>
    </citation>
    <scope>VARIANTS RP11 GLU-194 AND PRO-216</scope>
    <scope>TISSUE SPECIFICITY</scope>
</reference>
<reference key="27">
    <citation type="journal article" date="2002" name="Hum. Mol. Genet.">
        <title>Disease mechanism for retinitis pigmentosa (RP11) caused by mutations in the splicing factor gene PRPF31.</title>
        <authorList>
            <person name="Deery E.C."/>
            <person name="Vithana E.N."/>
            <person name="Newbold R.J."/>
            <person name="Gallon V.A."/>
            <person name="Bhattacharya S.S."/>
            <person name="Warren M.J."/>
            <person name="Hunt D.M."/>
            <person name="Wilkie S.E."/>
        </authorList>
    </citation>
    <scope>CHARACTERIZATION OF VARIANTS RP11 GLU-194 AND PRO-216</scope>
    <scope>SUBCELLULAR LOCATION</scope>
    <scope>NUCLEAR LOCALIZATION SIGNAL</scope>
    <scope>MUTAGENESIS OF 351-ARG--GLU-364</scope>
</reference>
<reference key="28">
    <citation type="journal article" date="2003" name="Am. J. Med. Genet. A">
        <title>Novel deletion in the pre-mRNA splicing gene PRPF31 causes autosomal dominant retinitis pigmentosa in a large Chinese family.</title>
        <authorList>
            <person name="Wang L."/>
            <person name="Ribaudo M."/>
            <person name="Zhao K."/>
            <person name="Yu N."/>
            <person name="Chen Q."/>
            <person name="Sun Q."/>
            <person name="Wang L."/>
            <person name="Wang Q."/>
        </authorList>
    </citation>
    <scope>VARIANT RP11 111-HIS--ILE-114 DEL</scope>
</reference>
<organism>
    <name type="scientific">Homo sapiens</name>
    <name type="common">Human</name>
    <dbReference type="NCBI Taxonomy" id="9606"/>
    <lineage>
        <taxon>Eukaryota</taxon>
        <taxon>Metazoa</taxon>
        <taxon>Chordata</taxon>
        <taxon>Craniata</taxon>
        <taxon>Vertebrata</taxon>
        <taxon>Euteleostomi</taxon>
        <taxon>Mammalia</taxon>
        <taxon>Eutheria</taxon>
        <taxon>Euarchontoglires</taxon>
        <taxon>Primates</taxon>
        <taxon>Haplorrhini</taxon>
        <taxon>Catarrhini</taxon>
        <taxon>Hominidae</taxon>
        <taxon>Homo</taxon>
    </lineage>
</organism>
<dbReference type="EMBL" id="AY040822">
    <property type="protein sequence ID" value="AAK77986.1"/>
    <property type="molecule type" value="mRNA"/>
</dbReference>
<dbReference type="EMBL" id="AF308303">
    <property type="protein sequence ID" value="AAG48270.1"/>
    <property type="molecule type" value="mRNA"/>
</dbReference>
<dbReference type="EMBL" id="AL050369">
    <property type="protein sequence ID" value="CAB43677.1"/>
    <property type="molecule type" value="mRNA"/>
</dbReference>
<dbReference type="EMBL" id="AK098547">
    <property type="protein sequence ID" value="BAC05329.1"/>
    <property type="molecule type" value="mRNA"/>
</dbReference>
<dbReference type="EMBL" id="AB593024">
    <property type="protein sequence ID" value="BAJ83978.1"/>
    <property type="molecule type" value="mRNA"/>
</dbReference>
<dbReference type="EMBL" id="AB593025">
    <property type="protein sequence ID" value="BAJ83979.1"/>
    <property type="molecule type" value="mRNA"/>
</dbReference>
<dbReference type="EMBL" id="AC012314">
    <property type="status" value="NOT_ANNOTATED_CDS"/>
    <property type="molecule type" value="Genomic_DNA"/>
</dbReference>
<dbReference type="EMBL" id="AC245052">
    <property type="status" value="NOT_ANNOTATED_CDS"/>
    <property type="molecule type" value="Genomic_DNA"/>
</dbReference>
<dbReference type="EMBL" id="CH471135">
    <property type="protein sequence ID" value="EAW72190.1"/>
    <property type="molecule type" value="Genomic_DNA"/>
</dbReference>
<dbReference type="EMBL" id="BC117389">
    <property type="protein sequence ID" value="AAI17390.1"/>
    <property type="molecule type" value="mRNA"/>
</dbReference>
<dbReference type="CCDS" id="CCDS12879.1">
    <molecule id="Q8WWY3-1"/>
</dbReference>
<dbReference type="RefSeq" id="NP_056444.3">
    <molecule id="Q8WWY3-1"/>
    <property type="nucleotide sequence ID" value="NM_015629.3"/>
</dbReference>
<dbReference type="RefSeq" id="XP_006723200.1">
    <molecule id="Q8WWY3-1"/>
    <property type="nucleotide sequence ID" value="XM_006723137.5"/>
</dbReference>
<dbReference type="RefSeq" id="XP_054176472.1">
    <molecule id="Q8WWY3-1"/>
    <property type="nucleotide sequence ID" value="XM_054320497.1"/>
</dbReference>
<dbReference type="RefSeq" id="XP_054185647.1">
    <molecule id="Q8WWY3-1"/>
    <property type="nucleotide sequence ID" value="XM_054329672.1"/>
</dbReference>
<dbReference type="RefSeq" id="XP_054186131.1">
    <molecule id="Q8WWY3-1"/>
    <property type="nucleotide sequence ID" value="XM_054330156.1"/>
</dbReference>
<dbReference type="RefSeq" id="XP_054186439.1">
    <molecule id="Q8WWY3-1"/>
    <property type="nucleotide sequence ID" value="XM_054330464.1"/>
</dbReference>
<dbReference type="RefSeq" id="XP_054186692.1">
    <molecule id="Q8WWY3-1"/>
    <property type="nucleotide sequence ID" value="XM_054330717.1"/>
</dbReference>
<dbReference type="RefSeq" id="XP_054186923.1">
    <molecule id="Q8WWY3-1"/>
    <property type="nucleotide sequence ID" value="XM_054330948.1"/>
</dbReference>
<dbReference type="RefSeq" id="XP_054187201.1">
    <molecule id="Q8WWY3-1"/>
    <property type="nucleotide sequence ID" value="XM_054331226.1"/>
</dbReference>
<dbReference type="RefSeq" id="XP_054187476.1">
    <molecule id="Q8WWY3-1"/>
    <property type="nucleotide sequence ID" value="XM_054331501.1"/>
</dbReference>
<dbReference type="RefSeq" id="XP_054189512.1">
    <molecule id="Q8WWY3-1"/>
    <property type="nucleotide sequence ID" value="XM_054333537.1"/>
</dbReference>
<dbReference type="RefSeq" id="XP_054189614.1">
    <molecule id="Q8WWY3-1"/>
    <property type="nucleotide sequence ID" value="XM_054333639.1"/>
</dbReference>
<dbReference type="PDB" id="2OZB">
    <property type="method" value="X-ray"/>
    <property type="resolution" value="2.60 A"/>
    <property type="chains" value="B/E=78-333"/>
</dbReference>
<dbReference type="PDB" id="3JCR">
    <property type="method" value="EM"/>
    <property type="resolution" value="7.00 A"/>
    <property type="chains" value="J=1-499"/>
</dbReference>
<dbReference type="PDB" id="3SIU">
    <property type="method" value="X-ray"/>
    <property type="resolution" value="2.63 A"/>
    <property type="chains" value="B/E=85-333"/>
</dbReference>
<dbReference type="PDB" id="3SIV">
    <property type="method" value="X-ray"/>
    <property type="resolution" value="3.30 A"/>
    <property type="chains" value="B/E/H/K=85-333"/>
</dbReference>
<dbReference type="PDB" id="5O9Z">
    <property type="method" value="EM"/>
    <property type="resolution" value="4.50 A"/>
    <property type="chains" value="H=1-499"/>
</dbReference>
<dbReference type="PDB" id="6AH0">
    <property type="method" value="EM"/>
    <property type="resolution" value="5.70 A"/>
    <property type="chains" value="L=1-499"/>
</dbReference>
<dbReference type="PDB" id="6AHD">
    <property type="method" value="EM"/>
    <property type="resolution" value="3.80 A"/>
    <property type="chains" value="L=1-499"/>
</dbReference>
<dbReference type="PDB" id="6QW6">
    <property type="method" value="EM"/>
    <property type="resolution" value="2.92 A"/>
    <property type="chains" value="4C=1-499"/>
</dbReference>
<dbReference type="PDB" id="6QX9">
    <property type="method" value="EM"/>
    <property type="resolution" value="3.28 A"/>
    <property type="chains" value="4C=1-499"/>
</dbReference>
<dbReference type="PDB" id="8H6E">
    <property type="method" value="EM"/>
    <property type="resolution" value="3.20 A"/>
    <property type="chains" value="4D=1-499"/>
</dbReference>
<dbReference type="PDB" id="8H6J">
    <property type="method" value="EM"/>
    <property type="resolution" value="3.25 A"/>
    <property type="chains" value="4D=1-499"/>
</dbReference>
<dbReference type="PDB" id="8H6K">
    <property type="method" value="EM"/>
    <property type="resolution" value="2.70 A"/>
    <property type="chains" value="4D=1-499"/>
</dbReference>
<dbReference type="PDB" id="8H6L">
    <property type="method" value="EM"/>
    <property type="resolution" value="2.60 A"/>
    <property type="chains" value="4D=1-499"/>
</dbReference>
<dbReference type="PDB" id="8Q7N">
    <property type="method" value="EM"/>
    <property type="resolution" value="3.10 A"/>
    <property type="chains" value="L=1-499"/>
</dbReference>
<dbReference type="PDB" id="8QO9">
    <property type="method" value="EM"/>
    <property type="resolution" value="5.29 A"/>
    <property type="chains" value="L=1-499"/>
</dbReference>
<dbReference type="PDB" id="8QOZ">
    <property type="method" value="EM"/>
    <property type="resolution" value="3.10 A"/>
    <property type="chains" value="L=1-499"/>
</dbReference>
<dbReference type="PDB" id="8QP8">
    <property type="method" value="EM"/>
    <property type="resolution" value="3.50 A"/>
    <property type="chains" value="L=1-499"/>
</dbReference>
<dbReference type="PDB" id="8QP9">
    <property type="method" value="EM"/>
    <property type="resolution" value="4.10 A"/>
    <property type="chains" value="L=1-499"/>
</dbReference>
<dbReference type="PDB" id="8QPA">
    <property type="method" value="EM"/>
    <property type="resolution" value="3.70 A"/>
    <property type="chains" value="L=1-499"/>
</dbReference>
<dbReference type="PDB" id="8QPB">
    <property type="method" value="EM"/>
    <property type="resolution" value="3.70 A"/>
    <property type="chains" value="L=1-499"/>
</dbReference>
<dbReference type="PDB" id="8QPE">
    <property type="method" value="EM"/>
    <property type="resolution" value="3.10 A"/>
    <property type="chains" value="L=1-499"/>
</dbReference>
<dbReference type="PDB" id="8QPK">
    <property type="method" value="EM"/>
    <property type="resolution" value="4.20 A"/>
    <property type="chains" value="L=1-499"/>
</dbReference>
<dbReference type="PDB" id="8QXD">
    <property type="method" value="EM"/>
    <property type="resolution" value="9.60 A"/>
    <property type="chains" value="L=1-499"/>
</dbReference>
<dbReference type="PDB" id="8QZS">
    <property type="method" value="EM"/>
    <property type="resolution" value="4.10 A"/>
    <property type="chains" value="L=1-499"/>
</dbReference>
<dbReference type="PDB" id="8R08">
    <property type="method" value="EM"/>
    <property type="resolution" value="6.10 A"/>
    <property type="chains" value="L=1-499"/>
</dbReference>
<dbReference type="PDB" id="8R09">
    <property type="method" value="EM"/>
    <property type="resolution" value="4.30 A"/>
    <property type="chains" value="L=1-499"/>
</dbReference>
<dbReference type="PDB" id="8R0A">
    <property type="method" value="EM"/>
    <property type="resolution" value="5.80 A"/>
    <property type="chains" value="L=1-499"/>
</dbReference>
<dbReference type="PDB" id="8R0B">
    <property type="method" value="EM"/>
    <property type="resolution" value="4.40 A"/>
    <property type="chains" value="L=1-499"/>
</dbReference>
<dbReference type="PDB" id="8RM5">
    <property type="method" value="EM"/>
    <property type="resolution" value="6.90 A"/>
    <property type="chains" value="L=1-499"/>
</dbReference>
<dbReference type="PDB" id="8Y6O">
    <property type="method" value="EM"/>
    <property type="resolution" value="3.38 A"/>
    <property type="chains" value="L=1-499"/>
</dbReference>
<dbReference type="PDBsum" id="2OZB"/>
<dbReference type="PDBsum" id="3JCR"/>
<dbReference type="PDBsum" id="3SIU"/>
<dbReference type="PDBsum" id="3SIV"/>
<dbReference type="PDBsum" id="5O9Z"/>
<dbReference type="PDBsum" id="6AH0"/>
<dbReference type="PDBsum" id="6AHD"/>
<dbReference type="PDBsum" id="6QW6"/>
<dbReference type="PDBsum" id="6QX9"/>
<dbReference type="PDBsum" id="8H6E"/>
<dbReference type="PDBsum" id="8H6J"/>
<dbReference type="PDBsum" id="8H6K"/>
<dbReference type="PDBsum" id="8H6L"/>
<dbReference type="PDBsum" id="8Q7N"/>
<dbReference type="PDBsum" id="8QO9"/>
<dbReference type="PDBsum" id="8QOZ"/>
<dbReference type="PDBsum" id="8QP8"/>
<dbReference type="PDBsum" id="8QP9"/>
<dbReference type="PDBsum" id="8QPA"/>
<dbReference type="PDBsum" id="8QPB"/>
<dbReference type="PDBsum" id="8QPE"/>
<dbReference type="PDBsum" id="8QPK"/>
<dbReference type="PDBsum" id="8QXD"/>
<dbReference type="PDBsum" id="8QZS"/>
<dbReference type="PDBsum" id="8R08"/>
<dbReference type="PDBsum" id="8R09"/>
<dbReference type="PDBsum" id="8R0A"/>
<dbReference type="PDBsum" id="8R0B"/>
<dbReference type="PDBsum" id="8RM5"/>
<dbReference type="PDBsum" id="8Y6O"/>
<dbReference type="EMDB" id="EMD-18225"/>
<dbReference type="EMDB" id="EMD-18529"/>
<dbReference type="EMDB" id="EMD-18542"/>
<dbReference type="EMDB" id="EMD-18544"/>
<dbReference type="EMDB" id="EMD-18545"/>
<dbReference type="EMDB" id="EMD-18546"/>
<dbReference type="EMDB" id="EMD-18547"/>
<dbReference type="EMDB" id="EMD-18548"/>
<dbReference type="EMDB" id="EMD-18555"/>
<dbReference type="EMDB" id="EMD-18718"/>
<dbReference type="EMDB" id="EMD-18781"/>
<dbReference type="EMDB" id="EMD-18786"/>
<dbReference type="EMDB" id="EMD-18787"/>
<dbReference type="EMDB" id="EMD-18788"/>
<dbReference type="EMDB" id="EMD-18789"/>
<dbReference type="EMDB" id="EMD-19349"/>
<dbReference type="EMDB" id="EMD-34500"/>
<dbReference type="EMDB" id="EMD-34505"/>
<dbReference type="EMDB" id="EMD-34507"/>
<dbReference type="EMDB" id="EMD-34508"/>
<dbReference type="EMDB" id="EMD-3766"/>
<dbReference type="EMDB" id="EMD-38993"/>
<dbReference type="EMDB" id="EMD-4658"/>
<dbReference type="EMDB" id="EMD-4665"/>
<dbReference type="EMDB" id="EMD-9621"/>
<dbReference type="EMDB" id="EMD-9624"/>
<dbReference type="SMR" id="Q8WWY3"/>
<dbReference type="BioGRID" id="117563">
    <property type="interactions" value="391"/>
</dbReference>
<dbReference type="ComplexPortal" id="CPX-2391">
    <property type="entry name" value="U4/U6.U5 small nuclear ribonucleoprotein complex"/>
</dbReference>
<dbReference type="CORUM" id="Q8WWY3"/>
<dbReference type="FunCoup" id="Q8WWY3">
    <property type="interactions" value="3601"/>
</dbReference>
<dbReference type="IntAct" id="Q8WWY3">
    <property type="interactions" value="246"/>
</dbReference>
<dbReference type="MINT" id="Q8WWY3"/>
<dbReference type="STRING" id="9606.ENSP00000324122"/>
<dbReference type="MoonProt" id="Q8WWY3"/>
<dbReference type="GlyGen" id="Q8WWY3">
    <property type="glycosylation" value="1 site, 1 O-linked glycan (1 site)"/>
</dbReference>
<dbReference type="iPTMnet" id="Q8WWY3"/>
<dbReference type="MetOSite" id="Q8WWY3"/>
<dbReference type="PhosphoSitePlus" id="Q8WWY3"/>
<dbReference type="BioMuta" id="PRPF31"/>
<dbReference type="DMDM" id="90101442"/>
<dbReference type="jPOST" id="Q8WWY3"/>
<dbReference type="MassIVE" id="Q8WWY3"/>
<dbReference type="PaxDb" id="9606-ENSP00000324122"/>
<dbReference type="PeptideAtlas" id="Q8WWY3"/>
<dbReference type="ProteomicsDB" id="17949"/>
<dbReference type="ProteomicsDB" id="74955">
    <molecule id="Q8WWY3-1"/>
</dbReference>
<dbReference type="ProteomicsDB" id="74956">
    <molecule id="Q8WWY3-2"/>
</dbReference>
<dbReference type="ProteomicsDB" id="74957">
    <molecule id="Q8WWY3-3"/>
</dbReference>
<dbReference type="Pumba" id="Q8WWY3"/>
<dbReference type="Antibodypedia" id="32797">
    <property type="antibodies" value="281 antibodies from 30 providers"/>
</dbReference>
<dbReference type="DNASU" id="26121"/>
<dbReference type="Ensembl" id="ENST00000321030.9">
    <molecule id="Q8WWY3-1"/>
    <property type="protein sequence ID" value="ENSP00000324122.4"/>
    <property type="gene ID" value="ENSG00000105618.14"/>
</dbReference>
<dbReference type="Ensembl" id="ENST00000419967.5">
    <molecule id="Q8WWY3-4"/>
    <property type="protein sequence ID" value="ENSP00000405166.2"/>
    <property type="gene ID" value="ENSG00000105618.14"/>
</dbReference>
<dbReference type="Ensembl" id="ENST00000610903.1">
    <molecule id="Q8WWY3-1"/>
    <property type="protein sequence ID" value="ENSP00000484896.1"/>
    <property type="gene ID" value="ENSG00000277154.4"/>
</dbReference>
<dbReference type="Ensembl" id="ENST00000612749.4">
    <molecule id="Q8WWY3-4"/>
    <property type="protein sequence ID" value="ENSP00000478804.1"/>
    <property type="gene ID" value="ENSG00000276421.4"/>
</dbReference>
<dbReference type="Ensembl" id="ENST00000613693.4">
    <molecule id="Q8WWY3-1"/>
    <property type="protein sequence ID" value="ENSP00000483929.1"/>
    <property type="gene ID" value="ENSG00000275885.4"/>
</dbReference>
<dbReference type="Ensembl" id="ENST00000614518.4">
    <molecule id="Q8WWY3-4"/>
    <property type="protein sequence ID" value="ENSP00000484151.1"/>
    <property type="gene ID" value="ENSG00000274651.4"/>
</dbReference>
<dbReference type="Ensembl" id="ENST00000615175.4">
    <molecule id="Q8WWY3-4"/>
    <property type="protein sequence ID" value="ENSP00000479700.1"/>
    <property type="gene ID" value="ENSG00000274144.4"/>
</dbReference>
<dbReference type="Ensembl" id="ENST00000616732.1">
    <molecule id="Q8WWY3-1"/>
    <property type="protein sequence ID" value="ENSP00000485017.1"/>
    <property type="gene ID" value="ENSG00000276421.4"/>
</dbReference>
<dbReference type="Ensembl" id="ENST00000618595.4">
    <molecule id="Q8WWY3-4"/>
    <property type="protein sequence ID" value="ENSP00000483382.1"/>
    <property type="gene ID" value="ENSG00000274894.4"/>
</dbReference>
<dbReference type="Ensembl" id="ENST00000618937.1">
    <molecule id="Q8WWY3-1"/>
    <property type="protein sequence ID" value="ENSP00000480434.1"/>
    <property type="gene ID" value="ENSG00000274651.4"/>
</dbReference>
<dbReference type="Ensembl" id="ENST00000619220.4">
    <molecule id="Q8WWY3-4"/>
    <property type="protein sequence ID" value="ENSP00000484834.1"/>
    <property type="gene ID" value="ENSG00000277953.4"/>
</dbReference>
<dbReference type="Ensembl" id="ENST00000619391.1">
    <molecule id="Q8WWY3-4"/>
    <property type="protein sequence ID" value="ENSP00000480636.1"/>
    <property type="gene ID" value="ENSG00000275885.4"/>
</dbReference>
<dbReference type="Ensembl" id="ENST00000619439.1">
    <molecule id="Q8WWY3-1"/>
    <property type="protein sequence ID" value="ENSP00000480725.1"/>
    <property type="gene ID" value="ENSG00000274894.4"/>
</dbReference>
<dbReference type="Ensembl" id="ENST00000619956.1">
    <molecule id="Q8WWY3-1"/>
    <property type="protein sequence ID" value="ENSP00000481201.1"/>
    <property type="gene ID" value="ENSG00000275117.4"/>
</dbReference>
<dbReference type="Ensembl" id="ENST00000620142.1">
    <molecule id="Q8WWY3-1"/>
    <property type="protein sequence ID" value="ENSP00000482626.1"/>
    <property type="gene ID" value="ENSG00000274144.4"/>
</dbReference>
<dbReference type="Ensembl" id="ENST00000620861.1">
    <molecule id="Q8WWY3-1"/>
    <property type="protein sequence ID" value="ENSP00000480726.1"/>
    <property type="gene ID" value="ENSG00000277707.4"/>
</dbReference>
<dbReference type="Ensembl" id="ENST00000621588.4">
    <molecule id="Q8WWY3-4"/>
    <property type="protein sequence ID" value="ENSP00000481708.1"/>
    <property type="gene ID" value="ENSG00000277154.4"/>
</dbReference>
<dbReference type="Ensembl" id="ENST00000622300.1">
    <molecule id="Q8WWY3-1"/>
    <property type="protein sequence ID" value="ENSP00000481654.1"/>
    <property type="gene ID" value="ENSG00000277953.4"/>
</dbReference>
<dbReference type="Ensembl" id="ENST00000622387.4">
    <molecule id="Q8WWY3-4"/>
    <property type="protein sequence ID" value="ENSP00000483982.1"/>
    <property type="gene ID" value="ENSG00000275117.4"/>
</dbReference>
<dbReference type="Ensembl" id="ENST00000622636.4">
    <molecule id="Q8WWY3-4"/>
    <property type="protein sequence ID" value="ENSP00000477787.1"/>
    <property type="gene ID" value="ENSG00000277707.4"/>
</dbReference>
<dbReference type="GeneID" id="26121"/>
<dbReference type="KEGG" id="hsa:26121"/>
<dbReference type="MANE-Select" id="ENST00000321030.9">
    <property type="protein sequence ID" value="ENSP00000324122.4"/>
    <property type="RefSeq nucleotide sequence ID" value="NM_015629.4"/>
    <property type="RefSeq protein sequence ID" value="NP_056444.3"/>
</dbReference>
<dbReference type="UCSC" id="uc002qdh.3">
    <molecule id="Q8WWY3-1"/>
    <property type="organism name" value="human"/>
</dbReference>
<dbReference type="UCSC" id="uc061cmv.1">
    <property type="organism name" value="human"/>
</dbReference>
<dbReference type="AGR" id="HGNC:15446"/>
<dbReference type="CTD" id="26121"/>
<dbReference type="DisGeNET" id="26121"/>
<dbReference type="GeneCards" id="PRPF31"/>
<dbReference type="GeneReviews" id="PRPF31"/>
<dbReference type="HGNC" id="HGNC:15446">
    <property type="gene designation" value="PRPF31"/>
</dbReference>
<dbReference type="HPA" id="ENSG00000105618">
    <property type="expression patterns" value="Low tissue specificity"/>
</dbReference>
<dbReference type="MalaCards" id="PRPF31"/>
<dbReference type="MIM" id="600138">
    <property type="type" value="phenotype"/>
</dbReference>
<dbReference type="MIM" id="606419">
    <property type="type" value="gene"/>
</dbReference>
<dbReference type="neXtProt" id="NX_Q8WWY3"/>
<dbReference type="OpenTargets" id="ENSG00000105618"/>
<dbReference type="Orphanet" id="791">
    <property type="disease" value="Retinitis pigmentosa"/>
</dbReference>
<dbReference type="PharmGKB" id="PA33814"/>
<dbReference type="VEuPathDB" id="HostDB:ENSG00000105618"/>
<dbReference type="eggNOG" id="KOG2574">
    <property type="taxonomic scope" value="Eukaryota"/>
</dbReference>
<dbReference type="GeneTree" id="ENSGT00550000075069"/>
<dbReference type="InParanoid" id="Q8WWY3"/>
<dbReference type="OMA" id="IGNGPMD"/>
<dbReference type="OrthoDB" id="4771285at2759"/>
<dbReference type="PAN-GO" id="Q8WWY3">
    <property type="GO annotations" value="4 GO annotations based on evolutionary models"/>
</dbReference>
<dbReference type="PhylomeDB" id="Q8WWY3"/>
<dbReference type="TreeFam" id="TF300677"/>
<dbReference type="PathwayCommons" id="Q8WWY3"/>
<dbReference type="Reactome" id="R-HSA-72163">
    <property type="pathway name" value="mRNA Splicing - Major Pathway"/>
</dbReference>
<dbReference type="SignaLink" id="Q8WWY3"/>
<dbReference type="SIGNOR" id="Q8WWY3"/>
<dbReference type="BioGRID-ORCS" id="26121">
    <property type="hits" value="792 hits in 1165 CRISPR screens"/>
</dbReference>
<dbReference type="CD-CODE" id="232F8A39">
    <property type="entry name" value="P-body"/>
</dbReference>
<dbReference type="CD-CODE" id="6F24707C">
    <property type="entry name" value="Cajal body"/>
</dbReference>
<dbReference type="CD-CODE" id="91857CE7">
    <property type="entry name" value="Nucleolus"/>
</dbReference>
<dbReference type="ChiTaRS" id="PRPF31">
    <property type="organism name" value="human"/>
</dbReference>
<dbReference type="EvolutionaryTrace" id="Q8WWY3"/>
<dbReference type="GeneWiki" id="PRPF31"/>
<dbReference type="GenomeRNAi" id="26121"/>
<dbReference type="Pharos" id="Q8WWY3">
    <property type="development level" value="Tbio"/>
</dbReference>
<dbReference type="PRO" id="PR:Q8WWY3"/>
<dbReference type="Proteomes" id="UP000005640">
    <property type="component" value="Chromosome 19"/>
</dbReference>
<dbReference type="RNAct" id="Q8WWY3">
    <property type="molecule type" value="protein"/>
</dbReference>
<dbReference type="Bgee" id="ENSG00000105618">
    <property type="expression patterns" value="Expressed in stromal cell of endometrium and 100 other cell types or tissues"/>
</dbReference>
<dbReference type="ExpressionAtlas" id="Q8WWY3">
    <property type="expression patterns" value="baseline and differential"/>
</dbReference>
<dbReference type="GO" id="GO:0015030">
    <property type="term" value="C:Cajal body"/>
    <property type="evidence" value="ECO:0000314"/>
    <property type="project" value="MGI"/>
</dbReference>
<dbReference type="GO" id="GO:0071339">
    <property type="term" value="C:MLL1 complex"/>
    <property type="evidence" value="ECO:0000314"/>
    <property type="project" value="UniProtKB"/>
</dbReference>
<dbReference type="GO" id="GO:0016607">
    <property type="term" value="C:nuclear speck"/>
    <property type="evidence" value="ECO:0000314"/>
    <property type="project" value="MGI"/>
</dbReference>
<dbReference type="GO" id="GO:0005654">
    <property type="term" value="C:nucleoplasm"/>
    <property type="evidence" value="ECO:0000314"/>
    <property type="project" value="HPA"/>
</dbReference>
<dbReference type="GO" id="GO:0005634">
    <property type="term" value="C:nucleus"/>
    <property type="evidence" value="ECO:0000314"/>
    <property type="project" value="UniProtKB"/>
</dbReference>
<dbReference type="GO" id="GO:0071011">
    <property type="term" value="C:precatalytic spliceosome"/>
    <property type="evidence" value="ECO:0000318"/>
    <property type="project" value="GO_Central"/>
</dbReference>
<dbReference type="GO" id="GO:0097526">
    <property type="term" value="C:spliceosomal tri-snRNP complex"/>
    <property type="evidence" value="ECO:0000318"/>
    <property type="project" value="GO_Central"/>
</dbReference>
<dbReference type="GO" id="GO:0071005">
    <property type="term" value="C:U2-type precatalytic spliceosome"/>
    <property type="evidence" value="ECO:0000314"/>
    <property type="project" value="UniProtKB"/>
</dbReference>
<dbReference type="GO" id="GO:0005684">
    <property type="term" value="C:U2-type spliceosomal complex"/>
    <property type="evidence" value="ECO:0000305"/>
    <property type="project" value="BHF-UCL"/>
</dbReference>
<dbReference type="GO" id="GO:0005687">
    <property type="term" value="C:U4 snRNP"/>
    <property type="evidence" value="ECO:0000314"/>
    <property type="project" value="BHF-UCL"/>
</dbReference>
<dbReference type="GO" id="GO:0046540">
    <property type="term" value="C:U4/U6 x U5 tri-snRNP complex"/>
    <property type="evidence" value="ECO:0000314"/>
    <property type="project" value="UniProtKB"/>
</dbReference>
<dbReference type="GO" id="GO:0005690">
    <property type="term" value="C:U4atac snRNP"/>
    <property type="evidence" value="ECO:0000314"/>
    <property type="project" value="UniProtKB"/>
</dbReference>
<dbReference type="GO" id="GO:0042802">
    <property type="term" value="F:identical protein binding"/>
    <property type="evidence" value="ECO:0000353"/>
    <property type="project" value="IntAct"/>
</dbReference>
<dbReference type="GO" id="GO:0030674">
    <property type="term" value="F:protein-macromolecule adaptor activity"/>
    <property type="evidence" value="ECO:0000314"/>
    <property type="project" value="UniProtKB"/>
</dbReference>
<dbReference type="GO" id="GO:0043021">
    <property type="term" value="F:ribonucleoprotein complex binding"/>
    <property type="evidence" value="ECO:0000314"/>
    <property type="project" value="MGI"/>
</dbReference>
<dbReference type="GO" id="GO:0003723">
    <property type="term" value="F:RNA binding"/>
    <property type="evidence" value="ECO:0007005"/>
    <property type="project" value="UniProtKB"/>
</dbReference>
<dbReference type="GO" id="GO:0070990">
    <property type="term" value="F:snRNP binding"/>
    <property type="evidence" value="ECO:0000353"/>
    <property type="project" value="BHF-UCL"/>
</dbReference>
<dbReference type="GO" id="GO:0030621">
    <property type="term" value="F:U4 snRNA binding"/>
    <property type="evidence" value="ECO:0000314"/>
    <property type="project" value="GO_Central"/>
</dbReference>
<dbReference type="GO" id="GO:0030622">
    <property type="term" value="F:U4atac snRNA binding"/>
    <property type="evidence" value="ECO:0000314"/>
    <property type="project" value="UniProtKB"/>
</dbReference>
<dbReference type="GO" id="GO:0000398">
    <property type="term" value="P:mRNA splicing, via spliceosome"/>
    <property type="evidence" value="ECO:0000314"/>
    <property type="project" value="UniProtKB"/>
</dbReference>
<dbReference type="GO" id="GO:0071166">
    <property type="term" value="P:ribonucleoprotein complex localization"/>
    <property type="evidence" value="ECO:0000315"/>
    <property type="project" value="UniProtKB"/>
</dbReference>
<dbReference type="GO" id="GO:0000244">
    <property type="term" value="P:spliceosomal tri-snRNP complex assembly"/>
    <property type="evidence" value="ECO:0000314"/>
    <property type="project" value="UniProtKB"/>
</dbReference>
<dbReference type="FunFam" id="1.10.287.4070:FF:000003">
    <property type="entry name" value="U4/U6 small nuclear ribonucleoprotein PRP31"/>
    <property type="match status" value="1"/>
</dbReference>
<dbReference type="FunFam" id="1.10.246.90:FF:000002">
    <property type="entry name" value="U4/U6 small nuclear ribonucleoprotein Prp31"/>
    <property type="match status" value="1"/>
</dbReference>
<dbReference type="Gene3D" id="1.10.287.4070">
    <property type="match status" value="1"/>
</dbReference>
<dbReference type="Gene3D" id="1.10.246.90">
    <property type="entry name" value="Nop domain"/>
    <property type="match status" value="1"/>
</dbReference>
<dbReference type="InterPro" id="IPR042239">
    <property type="entry name" value="Nop_C"/>
</dbReference>
<dbReference type="InterPro" id="IPR002687">
    <property type="entry name" value="Nop_dom"/>
</dbReference>
<dbReference type="InterPro" id="IPR036070">
    <property type="entry name" value="Nop_dom_sf"/>
</dbReference>
<dbReference type="InterPro" id="IPR012976">
    <property type="entry name" value="NOSIC"/>
</dbReference>
<dbReference type="InterPro" id="IPR027105">
    <property type="entry name" value="Prp31"/>
</dbReference>
<dbReference type="InterPro" id="IPR019175">
    <property type="entry name" value="Prp31_C"/>
</dbReference>
<dbReference type="PANTHER" id="PTHR13904">
    <property type="entry name" value="PRE-MRNA SPLICING FACTOR PRP31"/>
    <property type="match status" value="1"/>
</dbReference>
<dbReference type="PANTHER" id="PTHR13904:SF0">
    <property type="entry name" value="U4_U6 SMALL NUCLEAR RIBONUCLEOPROTEIN PRP31"/>
    <property type="match status" value="1"/>
</dbReference>
<dbReference type="Pfam" id="PF01798">
    <property type="entry name" value="Nop"/>
    <property type="match status" value="1"/>
</dbReference>
<dbReference type="Pfam" id="PF09785">
    <property type="entry name" value="Prp31_C"/>
    <property type="match status" value="1"/>
</dbReference>
<dbReference type="SMART" id="SM00931">
    <property type="entry name" value="NOSIC"/>
    <property type="match status" value="1"/>
</dbReference>
<dbReference type="SUPFAM" id="SSF89124">
    <property type="entry name" value="Nop domain"/>
    <property type="match status" value="1"/>
</dbReference>
<dbReference type="PROSITE" id="PS51358">
    <property type="entry name" value="NOP"/>
    <property type="match status" value="1"/>
</dbReference>
<comment type="function">
    <text evidence="5 11 15">Involved in pre-mRNA splicing as component of the spliceosome (PubMed:11867543, PubMed:20118938, PubMed:28781166). Required for the assembly of the U4/U5/U6 tri-snRNP complex, one of the building blocks of the spliceosome (PubMed:11867543).</text>
</comment>
<comment type="subunit">
    <text evidence="5 8 9 10 12 13 14 15 16">Identified in the spliceosome B complex (PubMed:28781166). Component of the U4/U6-U5 tri-snRNP complex composed of the U4, U6 and U5 snRNAs and at least PRPF3, PRPF4, PRPF6, PRPF8, PRPF31, SNRNP200, TXNL4A, SNRNP40, DDX23, CD2BP2, PPIH, SNU13, EFTUD2, SART1 and USP39 (PubMed:11867543, PubMed:16723661, PubMed:26912367). Interacts with a complex formed by SNU13 and U4 snRNA, but not with SNU13 or U4 snRNA alone (PubMed:17412961, PubMed:21784869). The complex formed by SNU13 and PRPF31 also binds U4atac snRNA, a characteristic component of specific, less abundant spliceosomal complexes (PubMed:21784869). Interacts with PRPF6/U5 snRNP-associated 102 kDa protein (PubMed:11867543, PubMed:17412961, PubMed:26912367). Component of some MLL1/MLL complex, at least composed of the core components KMT2A/MLL1, ASH2L, HCFC1/HCF1, WDR5 and RBBP5, as well as the facultative components BACC1, CHD8, E2F6, HSP70, INO80C, KANSL1, LAS1L, MAX, MCRS1, MGA, KAT8/MOF, PELP1, PHF20, PRP31, RING2, RUVB1/TIP49A, RUVB2/TIP49B, SENP3, TAF1, TAF4, TAF6, TAF7, TAF9 and TEX10 (PubMed:15960975). Interacts (via its NLS) with CTNNBL1 (PubMed:21385873). Interacts with USH1G (PubMed:34023904).</text>
</comment>
<comment type="interaction">
    <interactant intactId="EBI-1567797">
        <id>Q8WWY3</id>
    </interactant>
    <interactant intactId="EBI-12809012">
        <id>Q8WXK1</id>
        <label>ASB15</label>
    </interactant>
    <organismsDiffer>false</organismsDiffer>
    <experiments>3</experiments>
</comment>
<comment type="interaction">
    <interactant intactId="EBI-1567797">
        <id>Q8WWY3</id>
    </interactant>
    <interactant intactId="EBI-11975051">
        <id>Q8TD16-2</id>
        <label>BICD2</label>
    </interactant>
    <organismsDiffer>false</organismsDiffer>
    <experiments>3</experiments>
</comment>
<comment type="interaction">
    <interactant intactId="EBI-1567797">
        <id>Q8WWY3</id>
    </interactant>
    <interactant intactId="EBI-750200">
        <id>Q9BXJ1</id>
        <label>C1QTNF1</label>
    </interactant>
    <organismsDiffer>false</organismsDiffer>
    <experiments>3</experiments>
</comment>
<comment type="interaction">
    <interactant intactId="EBI-1567797">
        <id>Q8WWY3</id>
    </interactant>
    <interactant intactId="EBI-11536642">
        <id>Q9BXJ1-2</id>
        <label>C1QTNF1</label>
    </interactant>
    <organismsDiffer>false</organismsDiffer>
    <experiments>6</experiments>
</comment>
<comment type="interaction">
    <interactant intactId="EBI-1567797">
        <id>Q8WWY3</id>
    </interactant>
    <interactant intactId="EBI-739580">
        <id>Q13137</id>
        <label>CALCOCO2</label>
    </interactant>
    <organismsDiffer>false</organismsDiffer>
    <experiments>6</experiments>
</comment>
<comment type="interaction">
    <interactant intactId="EBI-1567797">
        <id>Q8WWY3</id>
    </interactant>
    <interactant intactId="EBI-12188723">
        <id>Q96L46</id>
        <label>CAPNS2</label>
    </interactant>
    <organismsDiffer>false</organismsDiffer>
    <experiments>3</experiments>
</comment>
<comment type="interaction">
    <interactant intactId="EBI-1567797">
        <id>Q8WWY3</id>
    </interactant>
    <interactant intactId="EBI-12114736">
        <id>Q9BXL6-2</id>
        <label>CARD14</label>
    </interactant>
    <organismsDiffer>false</organismsDiffer>
    <experiments>4</experiments>
</comment>
<comment type="interaction">
    <interactant intactId="EBI-1567797">
        <id>Q8WWY3</id>
    </interactant>
    <interactant intactId="EBI-711501">
        <id>Q9BWC9</id>
        <label>CCDC106</label>
    </interactant>
    <organismsDiffer>false</organismsDiffer>
    <experiments>3</experiments>
</comment>
<comment type="interaction">
    <interactant intactId="EBI-1567797">
        <id>Q8WWY3</id>
    </interactant>
    <interactant intactId="EBI-10171416">
        <id>Q96JN2-2</id>
        <label>CCDC136</label>
    </interactant>
    <organismsDiffer>false</organismsDiffer>
    <experiments>3</experiments>
</comment>
<comment type="interaction">
    <interactant intactId="EBI-1567797">
        <id>Q8WWY3</id>
    </interactant>
    <interactant intactId="EBI-740841">
        <id>Q8N5R6</id>
        <label>CCDC33</label>
    </interactant>
    <organismsDiffer>false</organismsDiffer>
    <experiments>3</experiments>
</comment>
<comment type="interaction">
    <interactant intactId="EBI-1567797">
        <id>Q8WWY3</id>
    </interactant>
    <interactant intactId="EBI-2808286">
        <id>Q2TAC2</id>
        <label>CCDC57</label>
    </interactant>
    <organismsDiffer>false</organismsDiffer>
    <experiments>3</experiments>
</comment>
<comment type="interaction">
    <interactant intactId="EBI-1567797">
        <id>Q8WWY3</id>
    </interactant>
    <interactant intactId="EBI-10961624">
        <id>Q2TAC2-2</id>
        <label>CCDC57</label>
    </interactant>
    <organismsDiffer>false</organismsDiffer>
    <experiments>6</experiments>
</comment>
<comment type="interaction">
    <interactant intactId="EBI-1567797">
        <id>Q8WWY3</id>
    </interactant>
    <interactant intactId="EBI-6873045">
        <id>Q6NSX1</id>
        <label>CCDC70</label>
    </interactant>
    <organismsDiffer>false</organismsDiffer>
    <experiments>3</experiments>
</comment>
<comment type="interaction">
    <interactant intactId="EBI-1567797">
        <id>Q8WWY3</id>
    </interactant>
    <interactant intactId="EBI-748961">
        <id>O95273</id>
        <label>CCNDBP1</label>
    </interactant>
    <organismsDiffer>false</organismsDiffer>
    <experiments>5</experiments>
</comment>
<comment type="interaction">
    <interactant intactId="EBI-1567797">
        <id>Q8WWY3</id>
    </interactant>
    <interactant intactId="EBI-396137">
        <id>Q9UJX2</id>
        <label>CDC23</label>
    </interactant>
    <organismsDiffer>false</organismsDiffer>
    <experiments>3</experiments>
</comment>
<comment type="interaction">
    <interactant intactId="EBI-1567797">
        <id>Q8WWY3</id>
    </interactant>
    <interactant intactId="EBI-5278764">
        <id>Q96GN5</id>
        <label>CDCA7L</label>
    </interactant>
    <organismsDiffer>false</organismsDiffer>
    <experiments>3</experiments>
</comment>
<comment type="interaction">
    <interactant intactId="EBI-1567797">
        <id>Q8WWY3</id>
    </interactant>
    <interactant intactId="EBI-9091443">
        <id>Q96GN5-2</id>
        <label>CDCA7L</label>
    </interactant>
    <organismsDiffer>false</organismsDiffer>
    <experiments>3</experiments>
</comment>
<comment type="interaction">
    <interactant intactId="EBI-1567797">
        <id>Q8WWY3</id>
    </interactant>
    <interactant intactId="EBI-11063830">
        <id>Q86X02</id>
        <label>CDR2L</label>
    </interactant>
    <organismsDiffer>false</organismsDiffer>
    <experiments>3</experiments>
</comment>
<comment type="interaction">
    <interactant intactId="EBI-1567797">
        <id>Q8WWY3</id>
    </interactant>
    <interactant intactId="EBI-739624">
        <id>Q8NHQ1</id>
        <label>CEP70</label>
    </interactant>
    <organismsDiffer>false</organismsDiffer>
    <experiments>9</experiments>
</comment>
<comment type="interaction">
    <interactant intactId="EBI-1567797">
        <id>Q8WWY3</id>
    </interactant>
    <interactant intactId="EBI-3867333">
        <id>A8MQ03</id>
        <label>CYSRT1</label>
    </interactant>
    <organismsDiffer>false</organismsDiffer>
    <experiments>3</experiments>
</comment>
<comment type="interaction">
    <interactant intactId="EBI-1567797">
        <id>Q8WWY3</id>
    </interactant>
    <interactant intactId="EBI-739789">
        <id>Q92997</id>
        <label>DVL3</label>
    </interactant>
    <organismsDiffer>false</organismsDiffer>
    <experiments>3</experiments>
</comment>
<comment type="interaction">
    <interactant intactId="EBI-1567797">
        <id>Q8WWY3</id>
    </interactant>
    <interactant intactId="EBI-743414">
        <id>O95967</id>
        <label>EFEMP2</label>
    </interactant>
    <organismsDiffer>false</organismsDiffer>
    <experiments>6</experiments>
</comment>
<comment type="interaction">
    <interactant intactId="EBI-1567797">
        <id>Q8WWY3</id>
    </interactant>
    <interactant intactId="EBI-852291">
        <id>O60447</id>
        <label>EVI5</label>
    </interactant>
    <organismsDiffer>false</organismsDiffer>
    <experiments>3</experiments>
</comment>
<comment type="interaction">
    <interactant intactId="EBI-1567797">
        <id>Q8WWY3</id>
    </interactant>
    <interactant intactId="EBI-1754067">
        <id>Q14296</id>
        <label>FASTK</label>
    </interactant>
    <organismsDiffer>false</organismsDiffer>
    <experiments>3</experiments>
</comment>
<comment type="interaction">
    <interactant intactId="EBI-1567797">
        <id>Q8WWY3</id>
    </interactant>
    <interactant intactId="EBI-11533409">
        <id>Q96Q35-2</id>
        <label>FLACC1</label>
    </interactant>
    <organismsDiffer>false</organismsDiffer>
    <experiments>3</experiments>
</comment>
<comment type="interaction">
    <interactant intactId="EBI-1567797">
        <id>Q8WWY3</id>
    </interactant>
    <interactant intactId="EBI-5661036">
        <id>A1L4K1</id>
        <label>FSD2</label>
    </interactant>
    <organismsDiffer>false</organismsDiffer>
    <experiments>3</experiments>
</comment>
<comment type="interaction">
    <interactant intactId="EBI-1567797">
        <id>Q8WWY3</id>
    </interactant>
    <interactant intactId="EBI-11022345">
        <id>P51114-2</id>
        <label>FXR1</label>
    </interactant>
    <organismsDiffer>false</organismsDiffer>
    <experiments>3</experiments>
</comment>
<comment type="interaction">
    <interactant intactId="EBI-1567797">
        <id>Q8WWY3</id>
    </interactant>
    <interactant intactId="EBI-618309">
        <id>Q08379</id>
        <label>GOLGA2</label>
    </interactant>
    <organismsDiffer>false</organismsDiffer>
    <experiments>11</experiments>
</comment>
<comment type="interaction">
    <interactant intactId="EBI-1567797">
        <id>Q8WWY3</id>
    </interactant>
    <interactant intactId="EBI-5916454">
        <id>A6NEM1</id>
        <label>GOLGA6L9</label>
    </interactant>
    <organismsDiffer>false</organismsDiffer>
    <experiments>3</experiments>
</comment>
<comment type="interaction">
    <interactant intactId="EBI-1567797">
        <id>Q8WWY3</id>
    </interactant>
    <interactant intactId="EBI-11519926">
        <id>Q6PI77</id>
        <label>GPRASP3</label>
    </interactant>
    <organismsDiffer>false</organismsDiffer>
    <experiments>3</experiments>
</comment>
<comment type="interaction">
    <interactant intactId="EBI-1567797">
        <id>Q8WWY3</id>
    </interactant>
    <interactant intactId="EBI-712814">
        <id>P54257</id>
        <label>HAP1</label>
    </interactant>
    <organismsDiffer>false</organismsDiffer>
    <experiments>3</experiments>
</comment>
<comment type="interaction">
    <interactant intactId="EBI-1567797">
        <id>Q8WWY3</id>
    </interactant>
    <interactant intactId="EBI-12163087">
        <id>Q9BYE0</id>
        <label>HES7</label>
    </interactant>
    <organismsDiffer>false</organismsDiffer>
    <experiments>3</experiments>
</comment>
<comment type="interaction">
    <interactant intactId="EBI-1567797">
        <id>Q8WWY3</id>
    </interactant>
    <interactant intactId="EBI-304185">
        <id>P61978</id>
        <label>HNRNPK</label>
    </interactant>
    <organismsDiffer>false</organismsDiffer>
    <experiments>6</experiments>
</comment>
<comment type="interaction">
    <interactant intactId="EBI-1567797">
        <id>Q8WWY3</id>
    </interactant>
    <interactant intactId="EBI-7060731">
        <id>P61978-2</id>
        <label>HNRNPK</label>
    </interactant>
    <organismsDiffer>false</organismsDiffer>
    <experiments>8</experiments>
</comment>
<comment type="interaction">
    <interactant intactId="EBI-1567797">
        <id>Q8WWY3</id>
    </interactant>
    <interactant intactId="EBI-10961706">
        <id>Q96ED9-2</id>
        <label>HOOK2</label>
    </interactant>
    <organismsDiffer>false</organismsDiffer>
    <experiments>3</experiments>
</comment>
<comment type="interaction">
    <interactant intactId="EBI-1567797">
        <id>Q8WWY3</id>
    </interactant>
    <interactant intactId="EBI-7116203">
        <id>O75031</id>
        <label>HSF2BP</label>
    </interactant>
    <organismsDiffer>false</organismsDiffer>
    <experiments>3</experiments>
</comment>
<comment type="interaction">
    <interactant intactId="EBI-1567797">
        <id>Q8WWY3</id>
    </interactant>
    <interactant intactId="EBI-466029">
        <id>P42858</id>
        <label>HTT</label>
    </interactant>
    <organismsDiffer>false</organismsDiffer>
    <experiments>3</experiments>
</comment>
<comment type="interaction">
    <interactant intactId="EBI-1567797">
        <id>Q8WWY3</id>
    </interactant>
    <interactant intactId="EBI-752007">
        <id>Q96AA8</id>
        <label>JAKMIP2</label>
    </interactant>
    <organismsDiffer>false</organismsDiffer>
    <experiments>8</experiments>
</comment>
<comment type="interaction">
    <interactant intactId="EBI-1567797">
        <id>Q8WWY3</id>
    </interactant>
    <interactant intactId="EBI-2556193">
        <id>Q63ZY3</id>
        <label>KANK2</label>
    </interactant>
    <organismsDiffer>false</organismsDiffer>
    <experiments>3</experiments>
</comment>
<comment type="interaction">
    <interactant intactId="EBI-1567797">
        <id>Q8WWY3</id>
    </interactant>
    <interactant intactId="EBI-2511344">
        <id>Q8NC69</id>
        <label>KCTD6</label>
    </interactant>
    <organismsDiffer>false</organismsDiffer>
    <experiments>10</experiments>
</comment>
<comment type="interaction">
    <interactant intactId="EBI-1567797">
        <id>Q8WWY3</id>
    </interactant>
    <interactant intactId="EBI-742808">
        <id>Q5VWX1</id>
        <label>KHDRBS2</label>
    </interactant>
    <organismsDiffer>false</organismsDiffer>
    <experiments>8</experiments>
</comment>
<comment type="interaction">
    <interactant intactId="EBI-1567797">
        <id>Q8WWY3</id>
    </interactant>
    <interactant intactId="EBI-722504">
        <id>O75525</id>
        <label>KHDRBS3</label>
    </interactant>
    <organismsDiffer>false</organismsDiffer>
    <experiments>6</experiments>
</comment>
<comment type="interaction">
    <interactant intactId="EBI-1567797">
        <id>Q8WWY3</id>
    </interactant>
    <interactant intactId="EBI-14069005">
        <id>Q9BVG8-5</id>
        <label>KIFC3</label>
    </interactant>
    <organismsDiffer>false</organismsDiffer>
    <experiments>3</experiments>
</comment>
<comment type="interaction">
    <interactant intactId="EBI-1567797">
        <id>Q8WWY3</id>
    </interactant>
    <interactant intactId="EBI-739566">
        <id>P19012</id>
        <label>KRT15</label>
    </interactant>
    <organismsDiffer>false</organismsDiffer>
    <experiments>9</experiments>
</comment>
<comment type="interaction">
    <interactant intactId="EBI-1567797">
        <id>Q8WWY3</id>
    </interactant>
    <interactant intactId="EBI-948001">
        <id>Q15323</id>
        <label>KRT31</label>
    </interactant>
    <organismsDiffer>false</organismsDiffer>
    <experiments>3</experiments>
</comment>
<comment type="interaction">
    <interactant intactId="EBI-1567797">
        <id>Q8WWY3</id>
    </interactant>
    <interactant intactId="EBI-1047093">
        <id>O76011</id>
        <label>KRT34</label>
    </interactant>
    <organismsDiffer>false</organismsDiffer>
    <experiments>3</experiments>
</comment>
<comment type="interaction">
    <interactant intactId="EBI-1567797">
        <id>Q8WWY3</id>
    </interactant>
    <interactant intactId="EBI-1058674">
        <id>Q92764</id>
        <label>KRT35</label>
    </interactant>
    <organismsDiffer>false</organismsDiffer>
    <experiments>3</experiments>
</comment>
<comment type="interaction">
    <interactant intactId="EBI-1567797">
        <id>Q8WWY3</id>
    </interactant>
    <interactant intactId="EBI-10171697">
        <id>Q6A162</id>
        <label>KRT40</label>
    </interactant>
    <organismsDiffer>false</organismsDiffer>
    <experiments>6</experiments>
</comment>
<comment type="interaction">
    <interactant intactId="EBI-1567797">
        <id>Q8WWY3</id>
    </interactant>
    <interactant intactId="EBI-11959885">
        <id>Q07627</id>
        <label>KRTAP1-1</label>
    </interactant>
    <organismsDiffer>false</organismsDiffer>
    <experiments>3</experiments>
</comment>
<comment type="interaction">
    <interactant intactId="EBI-1567797">
        <id>Q8WWY3</id>
    </interactant>
    <interactant intactId="EBI-11749135">
        <id>Q8IUG1</id>
        <label>KRTAP1-3</label>
    </interactant>
    <organismsDiffer>false</organismsDiffer>
    <experiments>3</experiments>
</comment>
<comment type="interaction">
    <interactant intactId="EBI-1567797">
        <id>Q8WWY3</id>
    </interactant>
    <interactant intactId="EBI-10171774">
        <id>P60410</id>
        <label>KRTAP10-8</label>
    </interactant>
    <organismsDiffer>false</organismsDiffer>
    <experiments>9</experiments>
</comment>
<comment type="interaction">
    <interactant intactId="EBI-1567797">
        <id>Q8WWY3</id>
    </interactant>
    <interactant intactId="EBI-10172052">
        <id>P60411</id>
        <label>KRTAP10-9</label>
    </interactant>
    <organismsDiffer>false</organismsDiffer>
    <experiments>6</experiments>
</comment>
<comment type="interaction">
    <interactant intactId="EBI-1567797">
        <id>Q8WWY3</id>
    </interactant>
    <interactant intactId="EBI-1048945">
        <id>Q3LI72</id>
        <label>KRTAP19-5</label>
    </interactant>
    <organismsDiffer>false</organismsDiffer>
    <experiments>3</experiments>
</comment>
<comment type="interaction">
    <interactant intactId="EBI-1567797">
        <id>Q8WWY3</id>
    </interactant>
    <interactant intactId="EBI-10302392">
        <id>Q9BYQ6</id>
        <label>KRTAP4-11</label>
    </interactant>
    <organismsDiffer>false</organismsDiffer>
    <experiments>3</experiments>
</comment>
<comment type="interaction">
    <interactant intactId="EBI-1567797">
        <id>Q8WWY3</id>
    </interactant>
    <interactant intactId="EBI-22311199">
        <id>Q3LI67</id>
        <label>KRTAP6-3</label>
    </interactant>
    <organismsDiffer>false</organismsDiffer>
    <experiments>3</experiments>
</comment>
<comment type="interaction">
    <interactant intactId="EBI-1567797">
        <id>Q8WWY3</id>
    </interactant>
    <interactant intactId="EBI-20141748">
        <id>P52954</id>
        <label>LBX1</label>
    </interactant>
    <organismsDiffer>false</organismsDiffer>
    <experiments>3</experiments>
</comment>
<comment type="interaction">
    <interactant intactId="EBI-1567797">
        <id>Q8WWY3</id>
    </interactant>
    <interactant intactId="EBI-740738">
        <id>O95751</id>
        <label>LDOC1</label>
    </interactant>
    <organismsDiffer>false</organismsDiffer>
    <experiments>10</experiments>
</comment>
<comment type="interaction">
    <interactant intactId="EBI-1567797">
        <id>Q8WWY3</id>
    </interactant>
    <interactant intactId="EBI-8474075">
        <id>Q68G74</id>
        <label>LHX8</label>
    </interactant>
    <organismsDiffer>false</organismsDiffer>
    <experiments>3</experiments>
</comment>
<comment type="interaction">
    <interactant intactId="EBI-1567797">
        <id>Q8WWY3</id>
    </interactant>
    <interactant intactId="EBI-741355">
        <id>Q96LR2</id>
        <label>LURAP1</label>
    </interactant>
    <organismsDiffer>false</organismsDiffer>
    <experiments>6</experiments>
</comment>
<comment type="interaction">
    <interactant intactId="EBI-1567797">
        <id>Q8WWY3</id>
    </interactant>
    <interactant intactId="EBI-741037">
        <id>Q9BRK4</id>
        <label>LZTS2</label>
    </interactant>
    <organismsDiffer>false</organismsDiffer>
    <experiments>3</experiments>
</comment>
<comment type="interaction">
    <interactant intactId="EBI-1567797">
        <id>Q8WWY3</id>
    </interactant>
    <interactant intactId="EBI-724076">
        <id>Q99750</id>
        <label>MDFI</label>
    </interactant>
    <organismsDiffer>false</organismsDiffer>
    <experiments>5</experiments>
</comment>
<comment type="interaction">
    <interactant intactId="EBI-1567797">
        <id>Q8WWY3</id>
    </interactant>
    <interactant intactId="EBI-18582591">
        <id>Q99687-3</id>
        <label>MEIS3</label>
    </interactant>
    <organismsDiffer>false</organismsDiffer>
    <experiments>3</experiments>
</comment>
<comment type="interaction">
    <interactant intactId="EBI-1567797">
        <id>Q8WWY3</id>
    </interactant>
    <interactant intactId="EBI-10172526">
        <id>Q9UJV3-2</id>
        <label>MID2</label>
    </interactant>
    <organismsDiffer>false</organismsDiffer>
    <experiments>11</experiments>
</comment>
<comment type="interaction">
    <interactant intactId="EBI-1567797">
        <id>Q8WWY3</id>
    </interactant>
    <interactant intactId="EBI-2548751">
        <id>Q8TD10</id>
        <label>MIPOL1</label>
    </interactant>
    <organismsDiffer>false</organismsDiffer>
    <experiments>6</experiments>
</comment>
<comment type="interaction">
    <interactant intactId="EBI-1567797">
        <id>Q8WWY3</id>
    </interactant>
    <interactant intactId="EBI-2340269">
        <id>Q13064</id>
        <label>MKRN3</label>
    </interactant>
    <organismsDiffer>false</organismsDiffer>
    <experiments>11</experiments>
</comment>
<comment type="interaction">
    <interactant intactId="EBI-1567797">
        <id>Q8WWY3</id>
    </interactant>
    <interactant intactId="EBI-742948">
        <id>Q5JR59</id>
        <label>MTUS2</label>
    </interactant>
    <organismsDiffer>false</organismsDiffer>
    <experiments>3</experiments>
</comment>
<comment type="interaction">
    <interactant intactId="EBI-1567797">
        <id>Q8WWY3</id>
    </interactant>
    <interactant intactId="EBI-11522433">
        <id>Q5JR59-3</id>
        <label>MTUS2</label>
    </interactant>
    <organismsDiffer>false</organismsDiffer>
    <experiments>6</experiments>
</comment>
<comment type="interaction">
    <interactant intactId="EBI-1567797">
        <id>Q8WWY3</id>
    </interactant>
    <interactant intactId="EBI-2548296">
        <id>Q6IBW4</id>
        <label>NCAPH2</label>
    </interactant>
    <organismsDiffer>false</organismsDiffer>
    <experiments>3</experiments>
</comment>
<comment type="interaction">
    <interactant intactId="EBI-1567797">
        <id>Q8WWY3</id>
    </interactant>
    <interactant intactId="EBI-10963850">
        <id>Q9NZQ3-3</id>
        <label>NCKIPSD</label>
    </interactant>
    <organismsDiffer>false</organismsDiffer>
    <experiments>3</experiments>
</comment>
<comment type="interaction">
    <interactant intactId="EBI-1567797">
        <id>Q8WWY3</id>
    </interactant>
    <interactant intactId="EBI-945833">
        <id>Q7Z3S9</id>
        <label>NOTCH2NLA</label>
    </interactant>
    <organismsDiffer>false</organismsDiffer>
    <experiments>6</experiments>
</comment>
<comment type="interaction">
    <interactant intactId="EBI-1567797">
        <id>Q8WWY3</id>
    </interactant>
    <interactant intactId="EBI-741896">
        <id>Q9P286</id>
        <label>PAK5</label>
    </interactant>
    <organismsDiffer>false</organismsDiffer>
    <experiments>6</experiments>
</comment>
<comment type="interaction">
    <interactant intactId="EBI-1567797">
        <id>Q8WWY3</id>
    </interactant>
    <interactant intactId="EBI-1105124">
        <id>Q5VU43</id>
        <label>PDE4DIP</label>
    </interactant>
    <organismsDiffer>false</organismsDiffer>
    <experiments>7</experiments>
</comment>
<comment type="interaction">
    <interactant intactId="EBI-1567797">
        <id>Q8WWY3</id>
    </interactant>
    <interactant intactId="EBI-713786">
        <id>Q8IXK0</id>
        <label>PHC2</label>
    </interactant>
    <organismsDiffer>false</organismsDiffer>
    <experiments>3</experiments>
</comment>
<comment type="interaction">
    <interactant intactId="EBI-1567797">
        <id>Q8WWY3</id>
    </interactant>
    <interactant intactId="EBI-11527347">
        <id>Q8IXK0-5</id>
        <label>PHC2</label>
    </interactant>
    <organismsDiffer>false</organismsDiffer>
    <experiments>3</experiments>
</comment>
<comment type="interaction">
    <interactant intactId="EBI-1567797">
        <id>Q8WWY3</id>
    </interactant>
    <interactant intactId="EBI-79165">
        <id>Q9NRD5</id>
        <label>PICK1</label>
    </interactant>
    <organismsDiffer>false</organismsDiffer>
    <experiments>3</experiments>
</comment>
<comment type="interaction">
    <interactant intactId="EBI-1567797">
        <id>Q8WWY3</id>
    </interactant>
    <interactant intactId="EBI-949255">
        <id>Q58EX7</id>
        <label>PLEKHG4</label>
    </interactant>
    <organismsDiffer>false</organismsDiffer>
    <experiments>3</experiments>
</comment>
<comment type="interaction">
    <interactant intactId="EBI-1567797">
        <id>Q8WWY3</id>
    </interactant>
    <interactant intactId="EBI-302345">
        <id>Q8ND90</id>
        <label>PNMA1</label>
    </interactant>
    <organismsDiffer>false</organismsDiffer>
    <experiments>11</experiments>
</comment>
<comment type="interaction">
    <interactant intactId="EBI-1567797">
        <id>Q8WWY3</id>
    </interactant>
    <interactant intactId="EBI-302355">
        <id>Q9UL42</id>
        <label>PNMA2</label>
    </interactant>
    <organismsDiffer>false</organismsDiffer>
    <experiments>6</experiments>
</comment>
<comment type="interaction">
    <interactant intactId="EBI-1567797">
        <id>Q8WWY3</id>
    </interactant>
    <interactant intactId="EBI-11278955">
        <id>Q9UL41</id>
        <label>PNMA3</label>
    </interactant>
    <organismsDiffer>false</organismsDiffer>
    <experiments>3</experiments>
</comment>
<comment type="interaction">
    <interactant intactId="EBI-1567797">
        <id>Q8WWY3</id>
    </interactant>
    <interactant intactId="EBI-710402">
        <id>Q96I34</id>
        <label>PPP1R16A</label>
    </interactant>
    <organismsDiffer>false</organismsDiffer>
    <experiments>3</experiments>
</comment>
<comment type="interaction">
    <interactant intactId="EBI-1567797">
        <id>Q8WWY3</id>
    </interactant>
    <interactant intactId="EBI-2561661">
        <id>Q969Q6</id>
        <label>PPP2R3C</label>
    </interactant>
    <organismsDiffer>false</organismsDiffer>
    <experiments>3</experiments>
</comment>
<comment type="interaction">
    <interactant intactId="EBI-1567797">
        <id>Q8WWY3</id>
    </interactant>
    <interactant intactId="EBI-3957793">
        <id>Q9GZV8</id>
        <label>PRDM14</label>
    </interactant>
    <organismsDiffer>false</organismsDiffer>
    <experiments>3</experiments>
</comment>
<comment type="interaction">
    <interactant intactId="EBI-1567797">
        <id>Q8WWY3</id>
    </interactant>
    <interactant intactId="EBI-2348662">
        <id>Q96MT3</id>
        <label>PRICKLE1</label>
    </interactant>
    <organismsDiffer>false</organismsDiffer>
    <experiments>6</experiments>
</comment>
<comment type="interaction">
    <interactant intactId="EBI-1567797">
        <id>Q8WWY3</id>
    </interactant>
    <interactant intactId="EBI-1567797">
        <id>Q8WWY3</id>
        <label>PRPF31</label>
    </interactant>
    <organismsDiffer>false</organismsDiffer>
    <experiments>3</experiments>
</comment>
<comment type="interaction">
    <interactant intactId="EBI-1567797">
        <id>Q8WWY3</id>
    </interactant>
    <interactant intactId="EBI-536755">
        <id>O94906</id>
        <label>PRPF6</label>
    </interactant>
    <organismsDiffer>false</organismsDiffer>
    <experiments>6</experiments>
</comment>
<comment type="interaction">
    <interactant intactId="EBI-1567797">
        <id>Q8WWY3</id>
    </interactant>
    <interactant intactId="EBI-1050964">
        <id>O43586</id>
        <label>PSTPIP1</label>
    </interactant>
    <organismsDiffer>false</organismsDiffer>
    <experiments>9</experiments>
</comment>
<comment type="interaction">
    <interactant intactId="EBI-1567797">
        <id>Q8WWY3</id>
    </interactant>
    <interactant intactId="EBI-1210429">
        <id>Q9NYW8</id>
        <label>RBAK</label>
    </interactant>
    <organismsDiffer>false</organismsDiffer>
    <experiments>3</experiments>
</comment>
<comment type="interaction">
    <interactant intactId="EBI-1567797">
        <id>Q8WWY3</id>
    </interactant>
    <interactant intactId="EBI-743526">
        <id>P38159</id>
        <label>RBMX</label>
    </interactant>
    <organismsDiffer>false</organismsDiffer>
    <experiments>6</experiments>
</comment>
<comment type="interaction">
    <interactant intactId="EBI-1567797">
        <id>Q8WWY3</id>
    </interactant>
    <interactant intactId="EBI-8638511">
        <id>P0DJD3</id>
        <label>RBMY1A1</label>
    </interactant>
    <organismsDiffer>false</organismsDiffer>
    <experiments>3</experiments>
</comment>
<comment type="interaction">
    <interactant intactId="EBI-1567797">
        <id>Q8WWY3</id>
    </interactant>
    <interactant intactId="EBI-11994018">
        <id>P0DJD3-2</id>
        <label>RBMY1A1</label>
    </interactant>
    <organismsDiffer>false</organismsDiffer>
    <experiments>6</experiments>
</comment>
<comment type="interaction">
    <interactant intactId="EBI-1567797">
        <id>Q8WWY3</id>
    </interactant>
    <interactant intactId="EBI-8642021">
        <id>Q15415</id>
        <label>RBMY1J</label>
    </interactant>
    <organismsDiffer>false</organismsDiffer>
    <experiments>9</experiments>
</comment>
<comment type="interaction">
    <interactant intactId="EBI-1567797">
        <id>Q8WWY3</id>
    </interactant>
    <interactant intactId="EBI-10829018">
        <id>Q04864-2</id>
        <label>REL</label>
    </interactant>
    <organismsDiffer>false</organismsDiffer>
    <experiments>3</experiments>
</comment>
<comment type="interaction">
    <interactant intactId="EBI-1567797">
        <id>Q8WWY3</id>
    </interactant>
    <interactant intactId="EBI-11957366">
        <id>Q59EK9-3</id>
        <label>RUNDC3A</label>
    </interactant>
    <organismsDiffer>false</organismsDiffer>
    <experiments>3</experiments>
</comment>
<comment type="interaction">
    <interactant intactId="EBI-1567797">
        <id>Q8WWY3</id>
    </interactant>
    <interactant intactId="EBI-747107">
        <id>Q8IUQ4</id>
        <label>SIAH1</label>
    </interactant>
    <organismsDiffer>false</organismsDiffer>
    <experiments>3</experiments>
</comment>
<comment type="interaction">
    <interactant intactId="EBI-1567797">
        <id>Q8WWY3</id>
    </interactant>
    <interactant intactId="EBI-11522811">
        <id>Q8IUQ4-2</id>
        <label>SIAH1</label>
    </interactant>
    <organismsDiffer>false</organismsDiffer>
    <experiments>3</experiments>
</comment>
<comment type="interaction">
    <interactant intactId="EBI-1567797">
        <id>Q8WWY3</id>
    </interactant>
    <interactant intactId="EBI-10269374">
        <id>Q8ND83</id>
        <label>SLAIN1</label>
    </interactant>
    <organismsDiffer>false</organismsDiffer>
    <experiments>3</experiments>
</comment>
<comment type="interaction">
    <interactant intactId="EBI-1567797">
        <id>Q8WWY3</id>
    </interactant>
    <interactant intactId="EBI-372557">
        <id>P84103</id>
        <label>SRSF3</label>
    </interactant>
    <organismsDiffer>false</organismsDiffer>
    <experiments>3</experiments>
</comment>
<comment type="interaction">
    <interactant intactId="EBI-1567797">
        <id>Q8WWY3</id>
    </interactant>
    <interactant intactId="EBI-2212028">
        <id>Q9Y2D8</id>
        <label>SSX2IP</label>
    </interactant>
    <organismsDiffer>false</organismsDiffer>
    <experiments>6</experiments>
</comment>
<comment type="interaction">
    <interactant intactId="EBI-1567797">
        <id>Q8WWY3</id>
    </interactant>
    <interactant intactId="EBI-714135">
        <id>O75558</id>
        <label>STX11</label>
    </interactant>
    <organismsDiffer>false</organismsDiffer>
    <experiments>6</experiments>
</comment>
<comment type="interaction">
    <interactant intactId="EBI-1567797">
        <id>Q8WWY3</id>
    </interactant>
    <interactant intactId="EBI-11523730">
        <id>A0A024R0Y4</id>
        <label>TADA2A</label>
    </interactant>
    <organismsDiffer>false</organismsDiffer>
    <experiments>3</experiments>
</comment>
<comment type="interaction">
    <interactant intactId="EBI-1567797">
        <id>Q8WWY3</id>
    </interactant>
    <interactant intactId="EBI-742268">
        <id>O75478</id>
        <label>TADA2A</label>
    </interactant>
    <organismsDiffer>false</organismsDiffer>
    <experiments>3</experiments>
</comment>
<comment type="interaction">
    <interactant intactId="EBI-1567797">
        <id>Q8WWY3</id>
    </interactant>
    <interactant intactId="EBI-1105213">
        <id>Q9UBB9</id>
        <label>TFIP11</label>
    </interactant>
    <organismsDiffer>false</organismsDiffer>
    <experiments>12</experiments>
</comment>
<comment type="interaction">
    <interactant intactId="EBI-1567797">
        <id>Q8WWY3</id>
    </interactant>
    <interactant intactId="EBI-717810">
        <id>Q08117</id>
        <label>TLE5</label>
    </interactant>
    <organismsDiffer>false</organismsDiffer>
    <experiments>3</experiments>
</comment>
<comment type="interaction">
    <interactant intactId="EBI-1567797">
        <id>Q8WWY3</id>
    </interactant>
    <interactant intactId="EBI-11741437">
        <id>Q08117-2</id>
        <label>TLE5</label>
    </interactant>
    <organismsDiffer>false</organismsDiffer>
    <experiments>10</experiments>
</comment>
<comment type="interaction">
    <interactant intactId="EBI-1567797">
        <id>Q8WWY3</id>
    </interactant>
    <interactant intactId="EBI-11952721">
        <id>Q05BL1</id>
        <label>TP53BP2</label>
    </interactant>
    <organismsDiffer>false</organismsDiffer>
    <experiments>3</experiments>
</comment>
<comment type="interaction">
    <interactant intactId="EBI-1567797">
        <id>Q8WWY3</id>
    </interactant>
    <interactant intactId="EBI-10175039">
        <id>Q13625-3</id>
        <label>TP53BP2</label>
    </interactant>
    <organismsDiffer>false</organismsDiffer>
    <experiments>3</experiments>
</comment>
<comment type="interaction">
    <interactant intactId="EBI-1567797">
        <id>Q8WWY3</id>
    </interactant>
    <interactant intactId="EBI-2820256">
        <id>Q14142</id>
        <label>TRIM14</label>
    </interactant>
    <organismsDiffer>false</organismsDiffer>
    <experiments>3</experiments>
</comment>
<comment type="interaction">
    <interactant intactId="EBI-1567797">
        <id>Q8WWY3</id>
    </interactant>
    <interactant intactId="EBI-740098">
        <id>P36406</id>
        <label>TRIM23</label>
    </interactant>
    <organismsDiffer>false</organismsDiffer>
    <experiments>3</experiments>
</comment>
<comment type="interaction">
    <interactant intactId="EBI-1567797">
        <id>Q8WWY3</id>
    </interactant>
    <interactant intactId="EBI-719493">
        <id>P14373</id>
        <label>TRIM27</label>
    </interactant>
    <organismsDiffer>false</organismsDiffer>
    <experiments>8</experiments>
</comment>
<comment type="interaction">
    <interactant intactId="EBI-1567797">
        <id>Q8WWY3</id>
    </interactant>
    <interactant intactId="EBI-725997">
        <id>Q8WV44</id>
        <label>TRIM41</label>
    </interactant>
    <organismsDiffer>false</organismsDiffer>
    <experiments>3</experiments>
</comment>
<comment type="interaction">
    <interactant intactId="EBI-1567797">
        <id>Q8WWY3</id>
    </interactant>
    <interactant intactId="EBI-744794">
        <id>Q9BZW7</id>
        <label>TSGA10</label>
    </interactant>
    <organismsDiffer>false</organismsDiffer>
    <experiments>6</experiments>
</comment>
<comment type="interaction">
    <interactant intactId="EBI-1567797">
        <id>Q8WWY3</id>
    </interactant>
    <interactant intactId="EBI-11524408">
        <id>Q5T124-6</id>
        <label>UBXN11</label>
    </interactant>
    <organismsDiffer>false</organismsDiffer>
    <experiments>3</experiments>
</comment>
<comment type="interaction">
    <interactant intactId="EBI-1567797">
        <id>Q8WWY3</id>
    </interactant>
    <interactant intactId="EBI-8601749">
        <id>Q495M9</id>
        <label>USH1G</label>
    </interactant>
    <organismsDiffer>false</organismsDiffer>
    <experiments>3</experiments>
</comment>
<comment type="interaction">
    <interactant intactId="EBI-1567797">
        <id>Q8WWY3</id>
    </interactant>
    <interactant intactId="EBI-11957238">
        <id>Q2TAL6</id>
        <label>VWC2</label>
    </interactant>
    <organismsDiffer>false</organismsDiffer>
    <experiments>3</experiments>
</comment>
<comment type="interaction">
    <interactant intactId="EBI-1567797">
        <id>Q8WWY3</id>
    </interactant>
    <interactant intactId="EBI-711679">
        <id>Q9NTW7</id>
        <label>ZFP64</label>
    </interactant>
    <organismsDiffer>false</organismsDiffer>
    <experiments>3</experiments>
</comment>
<comment type="interaction">
    <interactant intactId="EBI-1567797">
        <id>Q8WWY3</id>
    </interactant>
    <interactant intactId="EBI-10322364">
        <id>Q9UJL9</id>
        <label>ZFP69B</label>
    </interactant>
    <organismsDiffer>false</organismsDiffer>
    <experiments>3</experiments>
</comment>
<comment type="interaction">
    <interactant intactId="EBI-1567797">
        <id>Q8WWY3</id>
    </interactant>
    <interactant intactId="EBI-707773">
        <id>P17028</id>
        <label>ZNF24</label>
    </interactant>
    <organismsDiffer>false</organismsDiffer>
    <experiments>3</experiments>
</comment>
<comment type="interaction">
    <interactant intactId="EBI-1567797">
        <id>Q8WWY3</id>
    </interactant>
    <interactant intactId="EBI-10177272">
        <id>P15622-3</id>
        <label>ZNF250</label>
    </interactant>
    <organismsDiffer>false</organismsDiffer>
    <experiments>6</experiments>
</comment>
<comment type="interaction">
    <interactant intactId="EBI-1567797">
        <id>Q8WWY3</id>
    </interactant>
    <interactant intactId="EBI-347633">
        <id>Q9H9D4</id>
        <label>ZNF408</label>
    </interactant>
    <organismsDiffer>false</organismsDiffer>
    <experiments>3</experiments>
</comment>
<comment type="interaction">
    <interactant intactId="EBI-1567797">
        <id>Q8WWY3</id>
    </interactant>
    <interactant intactId="EBI-740727">
        <id>Q8TAU3</id>
        <label>ZNF417</label>
    </interactant>
    <organismsDiffer>false</organismsDiffer>
    <experiments>3</experiments>
</comment>
<comment type="interaction">
    <interactant intactId="EBI-1567797">
        <id>Q8WWY3</id>
    </interactant>
    <interactant intactId="EBI-751409">
        <id>Q8WTR7</id>
        <label>ZNF473</label>
    </interactant>
    <organismsDiffer>false</organismsDiffer>
    <experiments>3</experiments>
</comment>
<comment type="interaction">
    <interactant intactId="EBI-1567797">
        <id>Q8WWY3</id>
    </interactant>
    <interactant intactId="EBI-12006434">
        <id>Q96MX3</id>
        <label>ZNF48</label>
    </interactant>
    <organismsDiffer>false</organismsDiffer>
    <experiments>3</experiments>
</comment>
<comment type="interaction">
    <interactant intactId="EBI-1567797">
        <id>Q8WWY3</id>
    </interactant>
    <interactant intactId="EBI-6427977">
        <id>Q96SQ5</id>
        <label>ZNF587</label>
    </interactant>
    <organismsDiffer>false</organismsDiffer>
    <experiments>6</experiments>
</comment>
<comment type="interaction">
    <interactant intactId="EBI-1567797">
        <id>Q8WWY3</id>
    </interactant>
    <interactant intactId="EBI-12817597">
        <id>Q96K58-2</id>
        <label>ZNF668</label>
    </interactant>
    <organismsDiffer>false</organismsDiffer>
    <experiments>3</experiments>
</comment>
<comment type="interaction">
    <interactant intactId="EBI-1567797">
        <id>Q8WWY3</id>
    </interactant>
    <interactant intactId="EBI-7138235">
        <id>Q9NQZ8</id>
        <label>ZNF71</label>
    </interactant>
    <organismsDiffer>false</organismsDiffer>
    <experiments>3</experiments>
</comment>
<comment type="interaction">
    <interactant intactId="EBI-1567797">
        <id>Q8WWY3</id>
    </interactant>
    <interactant intactId="EBI-10251462">
        <id>Q6NX45</id>
        <label>ZNF774</label>
    </interactant>
    <organismsDiffer>false</organismsDiffer>
    <experiments>3</experiments>
</comment>
<comment type="interaction">
    <interactant intactId="EBI-1567797">
        <id>Q8WWY3</id>
    </interactant>
    <interactant intactId="EBI-10240849">
        <id>Q3KQV3</id>
        <label>ZNF792</label>
    </interactant>
    <organismsDiffer>false</organismsDiffer>
    <experiments>3</experiments>
</comment>
<comment type="interaction">
    <interactant intactId="EBI-1567797">
        <id>Q8WWY3</id>
    </interactant>
    <interactant intactId="EBI-11962574">
        <id>Q96EG3</id>
        <label>ZNF837</label>
    </interactant>
    <organismsDiffer>false</organismsDiffer>
    <experiments>3</experiments>
</comment>
<comment type="interaction">
    <interactant intactId="EBI-1567797">
        <id>Q8WWY3</id>
    </interactant>
    <interactant intactId="EBI-527853">
        <id>Q9UGI0</id>
        <label>ZRANB1</label>
    </interactant>
    <organismsDiffer>false</organismsDiffer>
    <experiments>3</experiments>
</comment>
<comment type="interaction">
    <interactant intactId="EBI-1567797">
        <id>Q8WWY3</id>
    </interactant>
    <interactant intactId="EBI-10178224">
        <id>P10073</id>
        <label>ZSCAN22</label>
    </interactant>
    <organismsDiffer>false</organismsDiffer>
    <experiments>3</experiments>
</comment>
<comment type="subcellular location">
    <subcellularLocation>
        <location evidence="6 14 15 16">Nucleus</location>
    </subcellularLocation>
    <subcellularLocation>
        <location evidence="5">Nucleus speckle</location>
    </subcellularLocation>
    <subcellularLocation>
        <location evidence="5">Nucleus</location>
        <location evidence="5">Cajal body</location>
    </subcellularLocation>
    <text evidence="5">Predominantly found in speckles and in Cajal bodies.</text>
</comment>
<comment type="alternative products">
    <event type="alternative splicing"/>
    <isoform>
        <id>Q8WWY3-1</id>
        <name>1</name>
        <sequence type="displayed"/>
    </isoform>
    <isoform>
        <id>Q8WWY3-2</id>
        <name>2</name>
        <sequence type="described" ref="VSP_017582 VSP_017584"/>
    </isoform>
    <isoform>
        <id>Q8WWY3-3</id>
        <name>3</name>
        <sequence type="described" ref="VSP_017581 VSP_017583"/>
    </isoform>
    <isoform>
        <id>Q8WWY3-4</id>
        <name>4</name>
        <sequence type="described" ref="VSP_057390"/>
    </isoform>
</comment>
<comment type="tissue specificity">
    <text evidence="4">Ubiquitously expressed.</text>
</comment>
<comment type="domain">
    <text evidence="10 13">Interacts with the snRNP via the Nop domain.</text>
</comment>
<comment type="domain">
    <text evidence="10 13">The coiled coil domain is formed by two non-contiguous helices.</text>
</comment>
<comment type="PTM">
    <text evidence="11">Phosphorylated by PRP4K during spliceosome assembly.</text>
</comment>
<comment type="disease" evidence="4 6 7 10 17">
    <disease id="DI-00978">
        <name>Retinitis pigmentosa 11</name>
        <acronym>RP11</acronym>
        <description>A retinal dystrophy belonging to the group of pigmentary retinopathies. Retinitis pigmentosa is characterized by retinal pigment deposits visible on fundus examination and primary loss of rod photoreceptor cells followed by secondary loss of cone photoreceptors. Patients typically have night vision blindness and loss of midperipheral visual field. As their condition progresses, they lose their far peripheral visual field and eventually central vision as well.</description>
        <dbReference type="MIM" id="600138"/>
    </disease>
    <text>The disease is caused by variants affecting the gene represented in this entry.</text>
</comment>
<comment type="similarity">
    <text evidence="21">Belongs to the PRP31 family.</text>
</comment>
<sequence>MSLADELLADLEEAAEEEEGGSYGEEEEEPAIEDVQEETQLDLSGDSVKTIAKLWDSKMFAEIMMKIEEYISKQAKASEVMGPVEAAPEYRVIVDANNLTVEIENELNIIHKFIRDKYSKRFPELESLVPNALDYIRTVKELGNSLDKCKNNENLQQILTNATIMVVSVTASTTQGQQLSEEELERLEEACDMALELNASKHRIYEYVESRMSFIAPNLSIIIGASTAAKIMGVAGGLTNLSKMPACNIMLLGAQRKTLSGFSSTSVLPHTGYIYHSDIVQSLPPDLRRKAARLVAAKCTLAARVDSFHESTEGKVGYELKDEIERKFDKWQEPPPVKQVKPLPAPLDGQRKKRGGRRYRKMKERLGLTEIRKQANRMSFGEIEEDAYQEDLGFSLGHLGKSGSGRVRQTQVNEATKARISKTLQRTLQKQSVVYGGKSTIRDRSSGTASSVAFTPLQGLEIVNPQAAEKKVAEANQKYFSSMAEFLKVKGEKSGLMST</sequence>
<gene>
    <name evidence="22" type="primary">PRPF31</name>
    <name type="synonym">PRP31</name>
</gene>
<accession>Q8WWY3</accession>
<accession>E7ESA8</accession>
<accession>F1T0A4</accession>
<accession>F1T0A5</accession>
<accession>Q17RB4</accession>
<accession>Q8N7F9</accession>
<accession>Q9H271</accession>
<accession>Q9Y439</accession>
<feature type="chain" id="PRO_0000227799" description="U4/U6 small nuclear ribonucleoprotein Prp31">
    <location>
        <begin position="1"/>
        <end position="499"/>
    </location>
</feature>
<feature type="domain" description="Nop" evidence="2">
    <location>
        <begin position="215"/>
        <end position="333"/>
    </location>
</feature>
<feature type="region of interest" description="Disordered" evidence="3">
    <location>
        <begin position="1"/>
        <end position="37"/>
    </location>
</feature>
<feature type="region of interest" description="Disordered" evidence="3">
    <location>
        <begin position="334"/>
        <end position="357"/>
    </location>
</feature>
<feature type="coiled-coil region" evidence="10">
    <location>
        <begin position="85"/>
        <end position="120"/>
    </location>
</feature>
<feature type="coiled-coil region" evidence="10">
    <location>
        <begin position="181"/>
        <end position="215"/>
    </location>
</feature>
<feature type="short sequence motif" description="Nuclear localization signal (NLS)" evidence="6">
    <location>
        <begin position="351"/>
        <end position="364"/>
    </location>
</feature>
<feature type="compositionally biased region" description="Acidic residues" evidence="3">
    <location>
        <begin position="7"/>
        <end position="37"/>
    </location>
</feature>
<feature type="site" description="Interaction with U4 snRNA" evidence="10">
    <location>
        <position position="247"/>
    </location>
</feature>
<feature type="site" description="Interaction with U4 snRNA and U4atac snRNA" evidence="10">
    <location>
        <position position="270"/>
    </location>
</feature>
<feature type="site" description="Interaction with U4atac snRNA" evidence="10">
    <location>
        <position position="289"/>
    </location>
</feature>
<feature type="site" description="Interaction with U4 snRNA and U4atac snRNA" evidence="10">
    <location>
        <position position="293"/>
    </location>
</feature>
<feature type="site" description="Interaction with U4 snRNA and U4atac snRNA" evidence="10">
    <location>
        <position position="298"/>
    </location>
</feature>
<feature type="modified residue" description="Phosphoserine" evidence="28">
    <location>
        <position position="379"/>
    </location>
</feature>
<feature type="modified residue" description="Phosphoserine" evidence="31">
    <location>
        <position position="395"/>
    </location>
</feature>
<feature type="modified residue" description="Phosphoserine" evidence="30">
    <location>
        <position position="432"/>
    </location>
</feature>
<feature type="modified residue" description="N6-acetyllysine" evidence="1">
    <location>
        <position position="438"/>
    </location>
</feature>
<feature type="modified residue" description="Phosphoserine" evidence="30">
    <location>
        <position position="439"/>
    </location>
</feature>
<feature type="modified residue" description="Phosphothreonine" evidence="30">
    <location>
        <position position="440"/>
    </location>
</feature>
<feature type="modified residue" description="Phosphoserine" evidence="27">
    <location>
        <position position="450"/>
    </location>
</feature>
<feature type="modified residue" description="Phosphothreonine" evidence="27 28 29 30 31">
    <location>
        <position position="455"/>
    </location>
</feature>
<feature type="cross-link" description="Glycyl lysine isopeptide (Lys-Gly) (interchain with G-Cter in SUMO2)" evidence="32">
    <location>
        <position position="471"/>
    </location>
</feature>
<feature type="cross-link" description="Glycyl lysine isopeptide (Lys-Gly) (interchain with G-Cter in SUMO2)" evidence="32">
    <location>
        <position position="478"/>
    </location>
</feature>
<feature type="splice variant" id="VSP_017581" description="In isoform 3." evidence="18">
    <location>
        <begin position="1"/>
        <end position="80"/>
    </location>
</feature>
<feature type="splice variant" id="VSP_017582" description="In isoform 2." evidence="19">
    <original>EPPPVKQVKPLPAPLDGQRKKRGGRRYRKMKE</original>
    <variation>RRRWLRPTRSISPAWLSSSRSRARRVALCPPE</variation>
    <location>
        <begin position="333"/>
        <end position="364"/>
    </location>
</feature>
<feature type="splice variant" id="VSP_017583" description="In isoform 3." evidence="18">
    <location>
        <begin position="359"/>
        <end position="499"/>
    </location>
</feature>
<feature type="splice variant" id="VSP_017584" description="In isoform 2." evidence="19">
    <location>
        <begin position="365"/>
        <end position="499"/>
    </location>
</feature>
<feature type="splice variant" id="VSP_057390" description="In isoform 4." evidence="20">
    <original>RTLQKQSVVYGGKSTIRDRSSGTASSVAFTPLQGLEIVNPQAAEKKVAEANQKYFSSMAEFLKVKGEKSGLMST</original>
    <variation>VWARPRWGWGPRDTRWGEPRSQPPCPPHSGPCRSRASYMAGSPPSATAPRARPPAWPSPHSRAWRL</variation>
    <location>
        <begin position="426"/>
        <end position="499"/>
    </location>
</feature>
<feature type="sequence variant" id="VAR_025629" description="In RP11; high penetrance." evidence="7">
    <location>
        <begin position="111"/>
        <end position="114"/>
    </location>
</feature>
<feature type="sequence variant" id="VAR_025630" description="In RP11; mislocation of the protein in the cytoplasm and reduced interaction with PRPF6; the result may be a deficiency in splicing function in the retina; dbSNP:rs119475043." evidence="4 6 10">
    <original>A</original>
    <variation>E</variation>
    <location>
        <position position="194"/>
    </location>
</feature>
<feature type="sequence variant" id="VAR_025631" description="In RP11; mislocation of the protein in the cytoplasm, but no effect on interaction with PRPF6; the result may be a deficiency in splicing function in the retina; dbSNP:rs119475042." evidence="4 6 10 17">
    <original>A</original>
    <variation>P</variation>
    <location>
        <position position="216"/>
    </location>
</feature>
<feature type="mutagenesis site" description="Reduces binding to the complex formed by U4 snRNA and SNU13." evidence="10">
    <original>H</original>
    <variation>A</variation>
    <variation>K</variation>
    <location>
        <position position="270"/>
    </location>
</feature>
<feature type="mutagenesis site" description="Abolishes nuclear localization." evidence="6">
    <location>
        <begin position="351"/>
        <end position="364"/>
    </location>
</feature>
<feature type="sequence conflict" description="In Ref. 1; AAK77986." evidence="21" ref="1">
    <original>E</original>
    <variation>D</variation>
    <location>
        <position position="188"/>
    </location>
</feature>
<feature type="sequence conflict" description="In Ref. 2; AAG48270." evidence="21" ref="2">
    <original>A</original>
    <variation>G</variation>
    <location>
        <position position="235"/>
    </location>
</feature>
<feature type="sequence conflict" description="In Ref. 3; CAB43677." evidence="21" ref="3">
    <original>M</original>
    <variation>V</variation>
    <location>
        <position position="244"/>
    </location>
</feature>
<feature type="helix" evidence="35">
    <location>
        <begin position="55"/>
        <end position="77"/>
    </location>
</feature>
<feature type="helix" evidence="33">
    <location>
        <begin position="89"/>
        <end position="118"/>
    </location>
</feature>
<feature type="turn" evidence="33">
    <location>
        <begin position="119"/>
        <end position="121"/>
    </location>
</feature>
<feature type="helix" evidence="33">
    <location>
        <begin position="125"/>
        <end position="128"/>
    </location>
</feature>
<feature type="helix" evidence="33">
    <location>
        <begin position="132"/>
        <end position="142"/>
    </location>
</feature>
<feature type="helix" evidence="33">
    <location>
        <begin position="146"/>
        <end position="148"/>
    </location>
</feature>
<feature type="helix" evidence="34">
    <location>
        <begin position="149"/>
        <end position="151"/>
    </location>
</feature>
<feature type="helix" evidence="33">
    <location>
        <begin position="155"/>
        <end position="157"/>
    </location>
</feature>
<feature type="helix" evidence="33">
    <location>
        <begin position="161"/>
        <end position="172"/>
    </location>
</feature>
<feature type="helix" evidence="33">
    <location>
        <begin position="181"/>
        <end position="215"/>
    </location>
</feature>
<feature type="helix" evidence="33">
    <location>
        <begin position="217"/>
        <end position="235"/>
    </location>
</feature>
<feature type="helix" evidence="33">
    <location>
        <begin position="238"/>
        <end position="242"/>
    </location>
</feature>
<feature type="helix" evidence="33">
    <location>
        <begin position="246"/>
        <end position="249"/>
    </location>
</feature>
<feature type="turn" evidence="33">
    <location>
        <begin position="250"/>
        <end position="253"/>
    </location>
</feature>
<feature type="strand" evidence="35">
    <location>
        <begin position="260"/>
        <end position="262"/>
    </location>
</feature>
<feature type="turn" evidence="36">
    <location>
        <begin position="264"/>
        <end position="267"/>
    </location>
</feature>
<feature type="turn" evidence="33">
    <location>
        <begin position="273"/>
        <end position="276"/>
    </location>
</feature>
<feature type="helix" evidence="33">
    <location>
        <begin position="278"/>
        <end position="281"/>
    </location>
</feature>
<feature type="helix" evidence="33">
    <location>
        <begin position="285"/>
        <end position="287"/>
    </location>
</feature>
<feature type="helix" evidence="33">
    <location>
        <begin position="288"/>
        <end position="307"/>
    </location>
</feature>
<feature type="strand" evidence="35">
    <location>
        <begin position="312"/>
        <end position="314"/>
    </location>
</feature>
<feature type="helix" evidence="33">
    <location>
        <begin position="315"/>
        <end position="331"/>
    </location>
</feature>
<feature type="helix" evidence="35">
    <location>
        <begin position="357"/>
        <end position="366"/>
    </location>
</feature>
<feature type="helix" evidence="35">
    <location>
        <begin position="370"/>
        <end position="376"/>
    </location>
</feature>
<feature type="strand" evidence="35">
    <location>
        <begin position="377"/>
        <end position="381"/>
    </location>
</feature>
<feature type="strand" evidence="37">
    <location>
        <begin position="385"/>
        <end position="388"/>
    </location>
</feature>
<feature type="strand" evidence="35">
    <location>
        <begin position="397"/>
        <end position="405"/>
    </location>
</feature>
<feature type="helix" evidence="35">
    <location>
        <begin position="414"/>
        <end position="416"/>
    </location>
</feature>
<feature type="helix" evidence="35">
    <location>
        <begin position="422"/>
        <end position="430"/>
    </location>
</feature>
<protein>
    <recommendedName>
        <fullName>U4/U6 small nuclear ribonucleoprotein Prp31</fullName>
    </recommendedName>
    <alternativeName>
        <fullName>Pre-mRNA-processing factor 31</fullName>
    </alternativeName>
    <alternativeName>
        <fullName>Serologically defined breast cancer antigen NY-BR-99</fullName>
    </alternativeName>
    <alternativeName>
        <fullName>U4/U6 snRNP 61 kDa protein</fullName>
        <shortName>Protein 61K</shortName>
        <shortName>hPrp31</shortName>
    </alternativeName>
</protein>
<evidence type="ECO:0000250" key="1">
    <source>
        <dbReference type="UniProtKB" id="Q8CCF0"/>
    </source>
</evidence>
<evidence type="ECO:0000255" key="2">
    <source>
        <dbReference type="PROSITE-ProRule" id="PRU00690"/>
    </source>
</evidence>
<evidence type="ECO:0000256" key="3">
    <source>
        <dbReference type="SAM" id="MobiDB-lite"/>
    </source>
</evidence>
<evidence type="ECO:0000269" key="4">
    <source>
    </source>
</evidence>
<evidence type="ECO:0000269" key="5">
    <source>
    </source>
</evidence>
<evidence type="ECO:0000269" key="6">
    <source>
    </source>
</evidence>
<evidence type="ECO:0000269" key="7">
    <source>
    </source>
</evidence>
<evidence type="ECO:0000269" key="8">
    <source>
    </source>
</evidence>
<evidence type="ECO:0000269" key="9">
    <source>
    </source>
</evidence>
<evidence type="ECO:0000269" key="10">
    <source>
    </source>
</evidence>
<evidence type="ECO:0000269" key="11">
    <source>
    </source>
</evidence>
<evidence type="ECO:0000269" key="12">
    <source>
    </source>
</evidence>
<evidence type="ECO:0000269" key="13">
    <source>
    </source>
</evidence>
<evidence type="ECO:0000269" key="14">
    <source>
    </source>
</evidence>
<evidence type="ECO:0000269" key="15">
    <source>
    </source>
</evidence>
<evidence type="ECO:0000269" key="16">
    <source>
    </source>
</evidence>
<evidence type="ECO:0000269" key="17">
    <source>
    </source>
</evidence>
<evidence type="ECO:0000303" key="18">
    <source>
    </source>
</evidence>
<evidence type="ECO:0000303" key="19">
    <source>
    </source>
</evidence>
<evidence type="ECO:0000303" key="20">
    <source>
    </source>
</evidence>
<evidence type="ECO:0000305" key="21"/>
<evidence type="ECO:0000312" key="22">
    <source>
        <dbReference type="HGNC" id="HGNC:15446"/>
    </source>
</evidence>
<evidence type="ECO:0007744" key="23">
    <source>
        <dbReference type="PDB" id="3JCR"/>
    </source>
</evidence>
<evidence type="ECO:0007744" key="24">
    <source>
        <dbReference type="PDB" id="3SIU"/>
    </source>
</evidence>
<evidence type="ECO:0007744" key="25">
    <source>
        <dbReference type="PDB" id="3SIV"/>
    </source>
</evidence>
<evidence type="ECO:0007744" key="26">
    <source>
        <dbReference type="PDB" id="5O9Z"/>
    </source>
</evidence>
<evidence type="ECO:0007744" key="27">
    <source>
    </source>
</evidence>
<evidence type="ECO:0007744" key="28">
    <source>
    </source>
</evidence>
<evidence type="ECO:0007744" key="29">
    <source>
    </source>
</evidence>
<evidence type="ECO:0007744" key="30">
    <source>
    </source>
</evidence>
<evidence type="ECO:0007744" key="31">
    <source>
    </source>
</evidence>
<evidence type="ECO:0007744" key="32">
    <source>
    </source>
</evidence>
<evidence type="ECO:0007829" key="33">
    <source>
        <dbReference type="PDB" id="2OZB"/>
    </source>
</evidence>
<evidence type="ECO:0007829" key="34">
    <source>
        <dbReference type="PDB" id="3SIU"/>
    </source>
</evidence>
<evidence type="ECO:0007829" key="35">
    <source>
        <dbReference type="PDB" id="8Q7N"/>
    </source>
</evidence>
<evidence type="ECO:0007829" key="36">
    <source>
        <dbReference type="PDB" id="8QOZ"/>
    </source>
</evidence>
<evidence type="ECO:0007829" key="37">
    <source>
        <dbReference type="PDB" id="8QP8"/>
    </source>
</evidence>
<name>PRP31_HUMAN</name>
<keyword id="KW-0002">3D-structure</keyword>
<keyword id="KW-0007">Acetylation</keyword>
<keyword id="KW-0025">Alternative splicing</keyword>
<keyword id="KW-0175">Coiled coil</keyword>
<keyword id="KW-0903">Direct protein sequencing</keyword>
<keyword id="KW-0225">Disease variant</keyword>
<keyword id="KW-1017">Isopeptide bond</keyword>
<keyword id="KW-0507">mRNA processing</keyword>
<keyword id="KW-0508">mRNA splicing</keyword>
<keyword id="KW-0539">Nucleus</keyword>
<keyword id="KW-0597">Phosphoprotein</keyword>
<keyword id="KW-1267">Proteomics identification</keyword>
<keyword id="KW-1185">Reference proteome</keyword>
<keyword id="KW-0682">Retinitis pigmentosa</keyword>
<keyword id="KW-0687">Ribonucleoprotein</keyword>
<keyword id="KW-0694">RNA-binding</keyword>
<keyword id="KW-0747">Spliceosome</keyword>
<keyword id="KW-0832">Ubl conjugation</keyword>
<proteinExistence type="evidence at protein level"/>